<reference key="1">
    <citation type="journal article" date="2001" name="Differentiation">
        <title>Overexpression of Hp95 induces G1 phase arrest in confluent HeLa cells.</title>
        <authorList>
            <person name="Wu Y."/>
            <person name="Pan S."/>
            <person name="Che S."/>
            <person name="He G."/>
            <person name="Nelman-Gonzalez M."/>
            <person name="Weil M.M."/>
            <person name="Kuang J."/>
        </authorList>
    </citation>
    <scope>NUCLEOTIDE SEQUENCE [MRNA] (ISOFORM 1)</scope>
    <scope>VARIANT SER-550</scope>
</reference>
<reference key="2">
    <citation type="journal article" date="2009" name="BMC Genomics">
        <title>Discovery of novel human transcript variants by analysis of intronic single-block EST with polyadenylation site.</title>
        <authorList>
            <person name="Wang P."/>
            <person name="Yu P."/>
            <person name="Gao P."/>
            <person name="Shi T."/>
            <person name="Ma D."/>
        </authorList>
    </citation>
    <scope>NUCLEOTIDE SEQUENCE [MRNA] (ISOFORM 3)</scope>
</reference>
<reference key="3">
    <citation type="submission" date="1999-05" db="EMBL/GenBank/DDBJ databases">
        <title>Molecular cloning of human ALG-2 interacting protein 1 (AIP1).</title>
        <authorList>
            <person name="Li H."/>
            <person name="Shioda T."/>
            <person name="Isselbacher K.J."/>
        </authorList>
    </citation>
    <scope>NUCLEOTIDE SEQUENCE [MRNA] (ISOFORM 1)</scope>
    <scope>VARIANTS THR-309 AND LEU-730</scope>
</reference>
<reference key="4">
    <citation type="submission" date="2003-05" db="EMBL/GenBank/DDBJ databases">
        <title>Cloning of human full-length CDSs in BD Creator(TM) system donor vector.</title>
        <authorList>
            <person name="Kalnine N."/>
            <person name="Chen X."/>
            <person name="Rolfs A."/>
            <person name="Halleck A."/>
            <person name="Hines L."/>
            <person name="Eisenstein S."/>
            <person name="Koundinya M."/>
            <person name="Raphael J."/>
            <person name="Moreira D."/>
            <person name="Kelley T."/>
            <person name="LaBaer J."/>
            <person name="Lin Y."/>
            <person name="Phelan M."/>
            <person name="Farmer A."/>
        </authorList>
    </citation>
    <scope>NUCLEOTIDE SEQUENCE [LARGE SCALE MRNA] (ISOFORM 1)</scope>
</reference>
<reference key="5">
    <citation type="journal article" date="2006" name="Nature">
        <title>The DNA sequence, annotation and analysis of human chromosome 3.</title>
        <authorList>
            <person name="Muzny D.M."/>
            <person name="Scherer S.E."/>
            <person name="Kaul R."/>
            <person name="Wang J."/>
            <person name="Yu J."/>
            <person name="Sudbrak R."/>
            <person name="Buhay C.J."/>
            <person name="Chen R."/>
            <person name="Cree A."/>
            <person name="Ding Y."/>
            <person name="Dugan-Rocha S."/>
            <person name="Gill R."/>
            <person name="Gunaratne P."/>
            <person name="Harris R.A."/>
            <person name="Hawes A.C."/>
            <person name="Hernandez J."/>
            <person name="Hodgson A.V."/>
            <person name="Hume J."/>
            <person name="Jackson A."/>
            <person name="Khan Z.M."/>
            <person name="Kovar-Smith C."/>
            <person name="Lewis L.R."/>
            <person name="Lozado R.J."/>
            <person name="Metzker M.L."/>
            <person name="Milosavljevic A."/>
            <person name="Miner G.R."/>
            <person name="Morgan M.B."/>
            <person name="Nazareth L.V."/>
            <person name="Scott G."/>
            <person name="Sodergren E."/>
            <person name="Song X.-Z."/>
            <person name="Steffen D."/>
            <person name="Wei S."/>
            <person name="Wheeler D.A."/>
            <person name="Wright M.W."/>
            <person name="Worley K.C."/>
            <person name="Yuan Y."/>
            <person name="Zhang Z."/>
            <person name="Adams C.Q."/>
            <person name="Ansari-Lari M.A."/>
            <person name="Ayele M."/>
            <person name="Brown M.J."/>
            <person name="Chen G."/>
            <person name="Chen Z."/>
            <person name="Clendenning J."/>
            <person name="Clerc-Blankenburg K.P."/>
            <person name="Chen R."/>
            <person name="Chen Z."/>
            <person name="Davis C."/>
            <person name="Delgado O."/>
            <person name="Dinh H.H."/>
            <person name="Dong W."/>
            <person name="Draper H."/>
            <person name="Ernst S."/>
            <person name="Fu G."/>
            <person name="Gonzalez-Garay M.L."/>
            <person name="Garcia D.K."/>
            <person name="Gillett W."/>
            <person name="Gu J."/>
            <person name="Hao B."/>
            <person name="Haugen E."/>
            <person name="Havlak P."/>
            <person name="He X."/>
            <person name="Hennig S."/>
            <person name="Hu S."/>
            <person name="Huang W."/>
            <person name="Jackson L.R."/>
            <person name="Jacob L.S."/>
            <person name="Kelly S.H."/>
            <person name="Kube M."/>
            <person name="Levy R."/>
            <person name="Li Z."/>
            <person name="Liu B."/>
            <person name="Liu J."/>
            <person name="Liu W."/>
            <person name="Lu J."/>
            <person name="Maheshwari M."/>
            <person name="Nguyen B.-V."/>
            <person name="Okwuonu G.O."/>
            <person name="Palmeiri A."/>
            <person name="Pasternak S."/>
            <person name="Perez L.M."/>
            <person name="Phelps K.A."/>
            <person name="Plopper F.J."/>
            <person name="Qiang B."/>
            <person name="Raymond C."/>
            <person name="Rodriguez R."/>
            <person name="Saenphimmachak C."/>
            <person name="Santibanez J."/>
            <person name="Shen H."/>
            <person name="Shen Y."/>
            <person name="Subramanian S."/>
            <person name="Tabor P.E."/>
            <person name="Verduzco D."/>
            <person name="Waldron L."/>
            <person name="Wang J."/>
            <person name="Wang J."/>
            <person name="Wang Q."/>
            <person name="Williams G.A."/>
            <person name="Wong G.K.-S."/>
            <person name="Yao Z."/>
            <person name="Zhang J."/>
            <person name="Zhang X."/>
            <person name="Zhao G."/>
            <person name="Zhou J."/>
            <person name="Zhou Y."/>
            <person name="Nelson D."/>
            <person name="Lehrach H."/>
            <person name="Reinhardt R."/>
            <person name="Naylor S.L."/>
            <person name="Yang H."/>
            <person name="Olson M."/>
            <person name="Weinstock G."/>
            <person name="Gibbs R.A."/>
        </authorList>
    </citation>
    <scope>NUCLEOTIDE SEQUENCE [LARGE SCALE GENOMIC DNA]</scope>
</reference>
<reference key="6">
    <citation type="journal article" date="2004" name="Genome Res.">
        <title>The status, quality, and expansion of the NIH full-length cDNA project: the Mammalian Gene Collection (MGC).</title>
        <authorList>
            <consortium name="The MGC Project Team"/>
        </authorList>
    </citation>
    <scope>NUCLEOTIDE SEQUENCE [LARGE SCALE MRNA] (ISOFORMS 1 AND 2)</scope>
    <scope>VARIANTS MET-7 AND ILE-378</scope>
    <source>
        <tissue>Lymph</tissue>
        <tissue>Testis</tissue>
    </source>
</reference>
<reference key="7">
    <citation type="submission" date="2008-03" db="UniProtKB">
        <authorList>
            <person name="Bienvenut W.V."/>
            <person name="Glen H."/>
            <person name="Frame M.C."/>
        </authorList>
    </citation>
    <scope>PROTEIN SEQUENCE OF 2-23; 111-120; 216-229; 439-446; 457-469 AND 542-553</scope>
    <scope>CLEAVAGE OF INITIATOR METHIONINE</scope>
    <scope>ACETYLATION AT ALA-2</scope>
    <scope>IDENTIFICATION BY MASS SPECTROMETRY</scope>
    <source>
        <tissue>Osteosarcoma</tissue>
    </source>
</reference>
<reference key="8">
    <citation type="journal article" date="2004" name="Nat. Genet.">
        <title>Complete sequencing and characterization of 21,243 full-length human cDNAs.</title>
        <authorList>
            <person name="Ota T."/>
            <person name="Suzuki Y."/>
            <person name="Nishikawa T."/>
            <person name="Otsuki T."/>
            <person name="Sugiyama T."/>
            <person name="Irie R."/>
            <person name="Wakamatsu A."/>
            <person name="Hayashi K."/>
            <person name="Sato H."/>
            <person name="Nagai K."/>
            <person name="Kimura K."/>
            <person name="Makita H."/>
            <person name="Sekine M."/>
            <person name="Obayashi M."/>
            <person name="Nishi T."/>
            <person name="Shibahara T."/>
            <person name="Tanaka T."/>
            <person name="Ishii S."/>
            <person name="Yamamoto J."/>
            <person name="Saito K."/>
            <person name="Kawai Y."/>
            <person name="Isono Y."/>
            <person name="Nakamura Y."/>
            <person name="Nagahari K."/>
            <person name="Murakami K."/>
            <person name="Yasuda T."/>
            <person name="Iwayanagi T."/>
            <person name="Wagatsuma M."/>
            <person name="Shiratori A."/>
            <person name="Sudo H."/>
            <person name="Hosoiri T."/>
            <person name="Kaku Y."/>
            <person name="Kodaira H."/>
            <person name="Kondo H."/>
            <person name="Sugawara M."/>
            <person name="Takahashi M."/>
            <person name="Kanda K."/>
            <person name="Yokoi T."/>
            <person name="Furuya T."/>
            <person name="Kikkawa E."/>
            <person name="Omura Y."/>
            <person name="Abe K."/>
            <person name="Kamihara K."/>
            <person name="Katsuta N."/>
            <person name="Sato K."/>
            <person name="Tanikawa M."/>
            <person name="Yamazaki M."/>
            <person name="Ninomiya K."/>
            <person name="Ishibashi T."/>
            <person name="Yamashita H."/>
            <person name="Murakawa K."/>
            <person name="Fujimori K."/>
            <person name="Tanai H."/>
            <person name="Kimata M."/>
            <person name="Watanabe M."/>
            <person name="Hiraoka S."/>
            <person name="Chiba Y."/>
            <person name="Ishida S."/>
            <person name="Ono Y."/>
            <person name="Takiguchi S."/>
            <person name="Watanabe S."/>
            <person name="Yosida M."/>
            <person name="Hotuta T."/>
            <person name="Kusano J."/>
            <person name="Kanehori K."/>
            <person name="Takahashi-Fujii A."/>
            <person name="Hara H."/>
            <person name="Tanase T.-O."/>
            <person name="Nomura Y."/>
            <person name="Togiya S."/>
            <person name="Komai F."/>
            <person name="Hara R."/>
            <person name="Takeuchi K."/>
            <person name="Arita M."/>
            <person name="Imose N."/>
            <person name="Musashino K."/>
            <person name="Yuuki H."/>
            <person name="Oshima A."/>
            <person name="Sasaki N."/>
            <person name="Aotsuka S."/>
            <person name="Yoshikawa Y."/>
            <person name="Matsunawa H."/>
            <person name="Ichihara T."/>
            <person name="Shiohata N."/>
            <person name="Sano S."/>
            <person name="Moriya S."/>
            <person name="Momiyama H."/>
            <person name="Satoh N."/>
            <person name="Takami S."/>
            <person name="Terashima Y."/>
            <person name="Suzuki O."/>
            <person name="Nakagawa S."/>
            <person name="Senoh A."/>
            <person name="Mizoguchi H."/>
            <person name="Goto Y."/>
            <person name="Shimizu F."/>
            <person name="Wakebe H."/>
            <person name="Hishigaki H."/>
            <person name="Watanabe T."/>
            <person name="Sugiyama A."/>
            <person name="Takemoto M."/>
            <person name="Kawakami B."/>
            <person name="Yamazaki M."/>
            <person name="Watanabe K."/>
            <person name="Kumagai A."/>
            <person name="Itakura S."/>
            <person name="Fukuzumi Y."/>
            <person name="Fujimori Y."/>
            <person name="Komiyama M."/>
            <person name="Tashiro H."/>
            <person name="Tanigami A."/>
            <person name="Fujiwara T."/>
            <person name="Ono T."/>
            <person name="Yamada K."/>
            <person name="Fujii Y."/>
            <person name="Ozaki K."/>
            <person name="Hirao M."/>
            <person name="Ohmori Y."/>
            <person name="Kawabata A."/>
            <person name="Hikiji T."/>
            <person name="Kobatake N."/>
            <person name="Inagaki H."/>
            <person name="Ikema Y."/>
            <person name="Okamoto S."/>
            <person name="Okitani R."/>
            <person name="Kawakami T."/>
            <person name="Noguchi S."/>
            <person name="Itoh T."/>
            <person name="Shigeta K."/>
            <person name="Senba T."/>
            <person name="Matsumura K."/>
            <person name="Nakajima Y."/>
            <person name="Mizuno T."/>
            <person name="Morinaga M."/>
            <person name="Sasaki M."/>
            <person name="Togashi T."/>
            <person name="Oyama M."/>
            <person name="Hata H."/>
            <person name="Watanabe M."/>
            <person name="Komatsu T."/>
            <person name="Mizushima-Sugano J."/>
            <person name="Satoh T."/>
            <person name="Shirai Y."/>
            <person name="Takahashi Y."/>
            <person name="Nakagawa K."/>
            <person name="Okumura K."/>
            <person name="Nagase T."/>
            <person name="Nomura N."/>
            <person name="Kikuchi H."/>
            <person name="Masuho Y."/>
            <person name="Yamashita R."/>
            <person name="Nakai K."/>
            <person name="Yada T."/>
            <person name="Nakamura Y."/>
            <person name="Ohara O."/>
            <person name="Isogai T."/>
            <person name="Sugano S."/>
        </authorList>
    </citation>
    <scope>NUCLEOTIDE SEQUENCE [LARGE SCALE MRNA] OF 209-868 (ISOFORM 1)</scope>
    <scope>VARIANT ILE-378</scope>
    <source>
        <tissue>Placenta</tissue>
    </source>
</reference>
<reference key="9">
    <citation type="journal article" date="2000" name="DNA Res.">
        <title>Prediction of the coding sequences of unidentified human genes. XVI. The complete sequences of 150 new cDNA clones from brain which code for large proteins in vitro.</title>
        <authorList>
            <person name="Nagase T."/>
            <person name="Kikuno R."/>
            <person name="Ishikawa K."/>
            <person name="Hirosawa M."/>
            <person name="Ohara O."/>
        </authorList>
    </citation>
    <scope>NUCLEOTIDE SEQUENCE [LARGE SCALE MRNA] OF 323-868 (ISOFORM 1)</scope>
    <scope>VARIANT SER-550</scope>
    <source>
        <tissue>Brain</tissue>
    </source>
</reference>
<reference key="10">
    <citation type="journal article" date="2003" name="J. Biol. Chem.">
        <title>The ALG-2-interacting protein Alix associates with CHMP4b, a human homologue of yeast Snf7 that is involved in multivesicular body sorting.</title>
        <authorList>
            <person name="Katoh K."/>
            <person name="Shibata H."/>
            <person name="Suzuki H."/>
            <person name="Narai A."/>
            <person name="Ishidoh K."/>
            <person name="Kominami E."/>
            <person name="Yoshimori T."/>
            <person name="Maki M."/>
        </authorList>
    </citation>
    <scope>INTERACTION WITH CHMP4A AND CHMP4B</scope>
</reference>
<reference key="11">
    <citation type="journal article" date="2003" name="Cell">
        <title>AIP1/ALIX is a binding partner for HIV-1 p6 and EIAV p9 functioning in virus budding.</title>
        <authorList>
            <person name="Strack B."/>
            <person name="Calistri A."/>
            <person name="Craig S."/>
            <person name="Popova E."/>
            <person name="Goettlinger H.G."/>
        </authorList>
    </citation>
    <scope>FUNCTION IN HIV-1 BUDDING (MICROBIAL INFECTION)</scope>
    <scope>INTERACTION WITH CHMP4A; CHMP4B AND CHMP4C</scope>
    <scope>INTERACTION WITH HIV-1 P6 AND EIAV P9 (MICROBIAL INFECTION)</scope>
</reference>
<reference key="12">
    <citation type="journal article" date="2003" name="Cell">
        <title>The protein network of HIV budding.</title>
        <authorList>
            <person name="von Schwedler U.K."/>
            <person name="Stuchell M."/>
            <person name="Mueller B."/>
            <person name="Ward D.M."/>
            <person name="Chung H.-Y."/>
            <person name="Morita E."/>
            <person name="Wang H.E."/>
            <person name="Davis T."/>
            <person name="He G.P."/>
            <person name="Cimbora D.M."/>
            <person name="Scott A."/>
            <person name="Kraeusslich H.-G."/>
            <person name="Kaplan J."/>
            <person name="Morham S.G."/>
            <person name="Sundquist W.I."/>
        </authorList>
    </citation>
    <scope>FUNCTION IN HIV-1 BUDDING (MICROBIAL INFECTION)</scope>
    <scope>SELF-ASSOCIATION</scope>
    <scope>INTERACTION WITH TSG101; CHMP4A; CHMP4B CHMP4C</scope>
    <scope>SUBCELLULAR LOCATION</scope>
</reference>
<reference key="13">
    <citation type="journal article" date="2003" name="Proc. Natl. Acad. Sci. U.S.A.">
        <title>Divergent retroviral late-budding domains recruit vacuolar protein sorting factors by using alternative adaptor proteins.</title>
        <authorList>
            <person name="Martin-Serrano J."/>
            <person name="Yarovoy A."/>
            <person name="Perez-Caballero D."/>
            <person name="Bieniasz P.D."/>
        </authorList>
    </citation>
    <scope>SELF-ASSOCIATION</scope>
    <scope>INTERACTION WITH TSG101; CHMP4A; CHMP4B AND CHMP4C</scope>
    <scope>INTERACTION WITH EIAV P9 (MICROBIAL INFECTION)</scope>
</reference>
<reference key="14">
    <citation type="journal article" date="2003" name="Proc. Natl. Acad. Sci. U.S.A.">
        <authorList>
            <person name="Martin-Serrano J."/>
            <person name="Yarovoy A."/>
            <person name="Perez-Caballero D."/>
            <person name="Bieniasz P.D."/>
        </authorList>
    </citation>
    <scope>ERRATUM OF PUBMED:14519844</scope>
</reference>
<reference key="15">
    <citation type="journal article" date="2004" name="Arch. Biochem. Biophys.">
        <title>CHMP4b is a major binding partner of the ALG-2-interacting protein Alix among the three CHMP4 isoforms.</title>
        <authorList>
            <person name="Katoh K."/>
            <person name="Shibata H."/>
            <person name="Hatta K."/>
            <person name="Maki M."/>
        </authorList>
    </citation>
    <scope>INTERACTION WITH CHMP4A; CHMP4B AND CHMP4C</scope>
</reference>
<reference key="16">
    <citation type="journal article" date="2004" name="Biochem. J.">
        <title>Structure and function of human Vps20 and Snf7 proteins.</title>
        <authorList>
            <person name="Peck J.W."/>
            <person name="Bowden E.T."/>
            <person name="Burbelo P.D."/>
        </authorList>
    </citation>
    <scope>INTERACTION WITH CHMP4A; CHMP4B AND CHMP4C</scope>
</reference>
<reference key="17">
    <citation type="journal article" date="2004" name="Science">
        <title>Role of LBPA and Alix in multivesicular liposome formation and endosome organization.</title>
        <authorList>
            <person name="Matsuo H."/>
            <person name="Chevallier J."/>
            <person name="Mayran N."/>
            <person name="Le Blanc I."/>
            <person name="Ferguson C."/>
            <person name="Faure J."/>
            <person name="Blanc N.S."/>
            <person name="Matile S."/>
            <person name="Dubochet J."/>
            <person name="Sadoul R."/>
            <person name="Parton R.G."/>
            <person name="Vilbois F."/>
            <person name="Gruenberg J."/>
        </authorList>
    </citation>
    <scope>FUNCTION IN ENDOSOME ORGANIZATION</scope>
</reference>
<reference key="18">
    <citation type="journal article" date="2005" name="Biosci. Biotechnol. Biochem.">
        <title>Identification of Rab GTPase-activating protein-like protein (RabGAPLP) as a novel Alix/AIP1-interacting protein.</title>
        <authorList>
            <person name="Ichioka F."/>
            <person name="Horii M."/>
            <person name="Katoh K."/>
            <person name="Terasawa Y."/>
            <person name="Shibata H."/>
            <person name="Maki M."/>
        </authorList>
    </citation>
    <scope>INTERACTION WITH SGSM3</scope>
    <scope>SUBCELLULAR LOCATION</scope>
</reference>
<reference key="19">
    <citation type="journal article" date="2005" name="J. Biol. Chem.">
        <title>Tsg101 and Alix interact with murine leukemia virus Gag and cooperate with Nedd4 ubiquitin ligases during budding.</title>
        <authorList>
            <person name="Segura-Morales C."/>
            <person name="Pescia C."/>
            <person name="Chatellard-Causse C."/>
            <person name="Sadoul R."/>
            <person name="Bertrand E."/>
            <person name="Basyuk E."/>
        </authorList>
    </citation>
    <scope>INTERACTION WITH MURINE LEUKEMIA VIRUS GAG POLYPROTEIN</scope>
</reference>
<reference key="20">
    <citation type="journal article" date="2006" name="J. Proteome Res.">
        <title>Proteomic and bioinformatic characterization of the biogenesis and function of melanosomes.</title>
        <authorList>
            <person name="Chi A."/>
            <person name="Valencia J.C."/>
            <person name="Hu Z.-Z."/>
            <person name="Watabe H."/>
            <person name="Yamaguchi H."/>
            <person name="Mangini N.J."/>
            <person name="Huang H."/>
            <person name="Canfield V.A."/>
            <person name="Cheng K.C."/>
            <person name="Yang F."/>
            <person name="Abe R."/>
            <person name="Yamagishi S."/>
            <person name="Shabanowitz J."/>
            <person name="Hearing V.J."/>
            <person name="Wu C."/>
            <person name="Appella E."/>
            <person name="Hunt D.F."/>
        </authorList>
    </citation>
    <scope>SUBCELLULAR LOCATION [LARGE SCALE ANALYSIS]</scope>
    <source>
        <tissue>Melanoma</tissue>
    </source>
</reference>
<reference key="21">
    <citation type="journal article" date="2006" name="Mol. Biol. Cell">
        <title>The Ca2+-binding protein ALG-2 is recruited to endoplasmic reticulum exit sites by Sec31A and stabilizes the localization of Sec31A.</title>
        <authorList>
            <person name="Yamasaki A."/>
            <person name="Tani K."/>
            <person name="Yamamoto A."/>
            <person name="Kitamura N."/>
            <person name="Komada M."/>
        </authorList>
    </citation>
    <scope>IDENTIFICATION BY MASS SPECTROMETRY</scope>
    <scope>INTERACTION WITH PDCD6</scope>
</reference>
<reference key="22">
    <citation type="journal article" date="2007" name="EMBO J.">
        <title>Human ESCRT and ALIX proteins interact with proteins of the midbody and function in cytokinesis.</title>
        <authorList>
            <person name="Morita E."/>
            <person name="Sandrin V."/>
            <person name="Chung H.Y."/>
            <person name="Morham S.G."/>
            <person name="Gygi S.P."/>
            <person name="Rodesch C.K."/>
            <person name="Sundquist W.I."/>
        </authorList>
    </citation>
    <scope>FUNCTION IN CYTOKINESIS</scope>
    <scope>SUBCELLULAR LOCATION</scope>
    <scope>INTERACTION WITH CEP55 AND CD2AP</scope>
    <scope>MUTAGENESIS OF ILE-212; PHE-676 AND 800-GLY--PRO-802</scope>
</reference>
<reference key="23">
    <citation type="journal article" date="2007" name="J. Virol.">
        <title>Potent rescue of human immunodeficiency virus type 1 late domain mutants by ALIX/AIP1 depends on its CHMP4 binding site.</title>
        <authorList>
            <person name="Usami Y."/>
            <person name="Popov S."/>
            <person name="Goettlinger H.G."/>
        </authorList>
    </citation>
    <scope>FUNCTION IN HIV-1 BUDDING (MICROBIAL INFECTION)</scope>
    <scope>INTERACTION WITH CHMP4B</scope>
    <scope>MUTAGENESIS OF PHE-199; LEU-216; PHE-317; ILE-318 AND TYR-319</scope>
</reference>
<reference key="24">
    <citation type="journal article" date="2007" name="Science">
        <title>Parallels between cytokinesis and retroviral budding: a role for the ESCRT machinery.</title>
        <authorList>
            <person name="Carlton J.G."/>
            <person name="Martin-Serrano J."/>
        </authorList>
    </citation>
    <scope>FUNCTION IN CYTOKINESIS AND HIV1 RELEASE</scope>
    <scope>SUBCELLULAR LOCATION</scope>
    <scope>INTERACTION WITH CEP55</scope>
</reference>
<reference key="25">
    <citation type="journal article" date="2008" name="J. Biol. Chem.">
        <title>Identification of Alix-type and non-Alix-type ALG-2-binding sites in human phospholipid scramblase 3: differential binding to an alternatively spliced isoform and amino acid-substituted mutants.</title>
        <authorList>
            <person name="Shibata H."/>
            <person name="Suzuki H."/>
            <person name="Kakiuchi T."/>
            <person name="Inuzuka T."/>
            <person name="Yoshida H."/>
            <person name="Mizuno T."/>
            <person name="Maki M."/>
        </authorList>
    </citation>
    <scope>INTERACTION WITH PDCD6</scope>
</reference>
<reference key="26">
    <citation type="journal article" date="2008" name="Proc. Natl. Acad. Sci. U.S.A.">
        <title>Differential requirements for Alix and ESCRT-III in cytokinesis and HIV-1 release.</title>
        <authorList>
            <person name="Carlton J.G."/>
            <person name="Agromayor M."/>
            <person name="Martin-Serrano J."/>
        </authorList>
    </citation>
    <scope>FUNCTION IN CYTOKINESIS AND HIV1 RELEASE</scope>
    <scope>INTERACTION WITH CEP55 AND TSG101</scope>
    <scope>SUBCELLULAR LOCATION</scope>
    <scope>MUTAGENESIS OF PHE-199; ILE-212; PHE-676; 717-PRO--PRO-720; 744-PRO-ARG-745; 757-ARG--PRO-759; 794-PRO--CYS-813; 801-PRO-PRO-802; 803-TYR-PRO-804; 805-THR-TYR-806; 852-PRO--PRO-855 AND 864-TYR-TYR-865</scope>
</reference>
<reference key="27">
    <citation type="journal article" date="2008" name="Proc. Natl. Acad. Sci. U.S.A.">
        <title>A quantitative atlas of mitotic phosphorylation.</title>
        <authorList>
            <person name="Dephoure N."/>
            <person name="Zhou C."/>
            <person name="Villen J."/>
            <person name="Beausoleil S.A."/>
            <person name="Bakalarski C.E."/>
            <person name="Elledge S.J."/>
            <person name="Gygi S.P."/>
        </authorList>
    </citation>
    <scope>PHOSPHORYLATION [LARGE SCALE ANALYSIS] AT SER-730; THR-738 AND THR-741</scope>
    <scope>IDENTIFICATION BY MASS SPECTROMETRY [LARGE SCALE ANALYSIS]</scope>
    <source>
        <tissue>Cervix carcinoma</tissue>
    </source>
</reference>
<reference key="28">
    <citation type="journal article" date="2009" name="Anal. Chem.">
        <title>Lys-N and trypsin cover complementary parts of the phosphoproteome in a refined SCX-based approach.</title>
        <authorList>
            <person name="Gauci S."/>
            <person name="Helbig A.O."/>
            <person name="Slijper M."/>
            <person name="Krijgsveld J."/>
            <person name="Heck A.J."/>
            <person name="Mohammed S."/>
        </authorList>
    </citation>
    <scope>ACETYLATION [LARGE SCALE ANALYSIS] AT ALA-2</scope>
    <scope>CLEAVAGE OF INITIATOR METHIONINE [LARGE SCALE ANALYSIS]</scope>
    <scope>IDENTIFICATION BY MASS SPECTROMETRY [LARGE SCALE ANALYSIS]</scope>
</reference>
<reference key="29">
    <citation type="journal article" date="2009" name="Biochem. Biophys. Res. Commun.">
        <title>Penta-EF-hand protein ALG-2 functions as a Ca2+-dependent adaptor that bridges Alix and TSG101.</title>
        <authorList>
            <person name="Okumura M."/>
            <person name="Ichioka F."/>
            <person name="Kobayashi R."/>
            <person name="Suzuki H."/>
            <person name="Yoshida H."/>
            <person name="Shibata H."/>
            <person name="Maki M."/>
        </authorList>
    </citation>
    <scope>INTERACTION WITH TSG101</scope>
</reference>
<reference key="30">
    <citation type="journal article" date="2009" name="Science">
        <title>Lysine acetylation targets protein complexes and co-regulates major cellular functions.</title>
        <authorList>
            <person name="Choudhary C."/>
            <person name="Kumar C."/>
            <person name="Gnad F."/>
            <person name="Nielsen M.L."/>
            <person name="Rehman M."/>
            <person name="Walther T.C."/>
            <person name="Olsen J.V."/>
            <person name="Mann M."/>
        </authorList>
    </citation>
    <scope>ACETYLATION [LARGE SCALE ANALYSIS] AT LYS-215</scope>
    <scope>IDENTIFICATION BY MASS SPECTROMETRY [LARGE SCALE ANALYSIS]</scope>
</reference>
<reference key="31">
    <citation type="journal article" date="2010" name="Cell. Signal.">
        <title>Mutation of tyrosine residue 857 in the PDGF beta-receptor affects cell proliferation but not migration.</title>
        <authorList>
            <person name="Wardega P."/>
            <person name="Heldin C.H."/>
            <person name="Lennartsson J."/>
        </authorList>
    </citation>
    <scope>PHOSPHORYLATION</scope>
    <scope>INTERACTION WITH PDGFRB</scope>
</reference>
<reference key="32">
    <citation type="journal article" date="2010" name="Sci. Signal.">
        <title>Quantitative phosphoproteomics reveals widespread full phosphorylation site occupancy during mitosis.</title>
        <authorList>
            <person name="Olsen J.V."/>
            <person name="Vermeulen M."/>
            <person name="Santamaria A."/>
            <person name="Kumar C."/>
            <person name="Miller M.L."/>
            <person name="Jensen L.J."/>
            <person name="Gnad F."/>
            <person name="Cox J."/>
            <person name="Jensen T.S."/>
            <person name="Nigg E.A."/>
            <person name="Brunak S."/>
            <person name="Mann M."/>
        </authorList>
    </citation>
    <scope>PHOSPHORYLATION [LARGE SCALE ANALYSIS] AT THR-738 AND THR-741</scope>
    <scope>IDENTIFICATION BY MASS SPECTROMETRY [LARGE SCALE ANALYSIS]</scope>
    <source>
        <tissue>Cervix carcinoma</tissue>
    </source>
</reference>
<reference key="33">
    <citation type="journal article" date="2011" name="BMC Syst. Biol.">
        <title>Initial characterization of the human central proteome.</title>
        <authorList>
            <person name="Burkard T.R."/>
            <person name="Planyavsky M."/>
            <person name="Kaupe I."/>
            <person name="Breitwieser F.P."/>
            <person name="Buerckstuemmer T."/>
            <person name="Bennett K.L."/>
            <person name="Superti-Furga G."/>
            <person name="Colinge J."/>
        </authorList>
    </citation>
    <scope>IDENTIFICATION BY MASS SPECTROMETRY [LARGE SCALE ANALYSIS]</scope>
</reference>
<reference key="34">
    <citation type="journal article" date="2011" name="J. Virol.">
        <title>Multiple interactions between the ESCRT machinery and arrestin-related proteins: implications for PPXY-dependent budding.</title>
        <authorList>
            <person name="Rauch S."/>
            <person name="Martin-Serrano J."/>
        </authorList>
    </citation>
    <scope>INTERACTION WITH ARRDC1</scope>
</reference>
<reference key="35">
    <citation type="journal article" date="2012" name="Mol. Cell. Proteomics">
        <title>Comparative large-scale characterisation of plant vs. mammal proteins reveals similar and idiosyncratic N-alpha acetylation features.</title>
        <authorList>
            <person name="Bienvenut W.V."/>
            <person name="Sumpton D."/>
            <person name="Martinez A."/>
            <person name="Lilla S."/>
            <person name="Espagne C."/>
            <person name="Meinnel T."/>
            <person name="Giglione C."/>
        </authorList>
    </citation>
    <scope>ACETYLATION [LARGE SCALE ANALYSIS] AT ALA-2</scope>
    <scope>CLEAVAGE OF INITIATOR METHIONINE [LARGE SCALE ANALYSIS]</scope>
    <scope>IDENTIFICATION BY MASS SPECTROMETRY [LARGE SCALE ANALYSIS]</scope>
</reference>
<reference key="36">
    <citation type="journal article" date="2012" name="Nat. Cell Biol.">
        <title>Syndecan-syntenin-ALIX regulates the biogenesis of exosomes.</title>
        <authorList>
            <person name="Baietti M.F."/>
            <person name="Zhang Z."/>
            <person name="Mortier E."/>
            <person name="Melchior A."/>
            <person name="Degeest G."/>
            <person name="Geeraerts A."/>
            <person name="Ivarsson Y."/>
            <person name="Depoortere F."/>
            <person name="Coomans C."/>
            <person name="Vermeiren E."/>
            <person name="Zimmermann P."/>
            <person name="David G."/>
        </authorList>
    </citation>
    <scope>FUNCTION</scope>
    <scope>SUBCELLULAR LOCATION</scope>
    <scope>INTERACTION WITH SDCBP AND SDC2</scope>
    <scope>MUTAGENESIS OF PHE-676</scope>
</reference>
<reference key="37">
    <citation type="journal article" date="2013" name="J. Proteome Res.">
        <title>Toward a comprehensive characterization of a human cancer cell phosphoproteome.</title>
        <authorList>
            <person name="Zhou H."/>
            <person name="Di Palma S."/>
            <person name="Preisinger C."/>
            <person name="Peng M."/>
            <person name="Polat A.N."/>
            <person name="Heck A.J."/>
            <person name="Mohammed S."/>
        </authorList>
    </citation>
    <scope>PHOSPHORYLATION [LARGE SCALE ANALYSIS] AT THR-479 AND SER-481</scope>
    <scope>IDENTIFICATION BY MASS SPECTROMETRY [LARGE SCALE ANALYSIS]</scope>
    <source>
        <tissue>Cervix carcinoma</tissue>
        <tissue>Erythroleukemia</tissue>
    </source>
</reference>
<reference key="38">
    <citation type="journal article" date="2014" name="J. Proteomics">
        <title>An enzyme assisted RP-RPLC approach for in-depth analysis of human liver phosphoproteome.</title>
        <authorList>
            <person name="Bian Y."/>
            <person name="Song C."/>
            <person name="Cheng K."/>
            <person name="Dong M."/>
            <person name="Wang F."/>
            <person name="Huang J."/>
            <person name="Sun D."/>
            <person name="Wang L."/>
            <person name="Ye M."/>
            <person name="Zou H."/>
        </authorList>
    </citation>
    <scope>IDENTIFICATION BY MASS SPECTROMETRY [LARGE SCALE ANALYSIS]</scope>
    <source>
        <tissue>Liver</tissue>
    </source>
</reference>
<reference key="39">
    <citation type="journal article" date="2014" name="Mol. Cell. Proteomics">
        <title>Immunoaffinity enrichment and mass spectrometry analysis of protein methylation.</title>
        <authorList>
            <person name="Guo A."/>
            <person name="Gu H."/>
            <person name="Zhou J."/>
            <person name="Mulhern D."/>
            <person name="Wang Y."/>
            <person name="Lee K.A."/>
            <person name="Yang V."/>
            <person name="Aguiar M."/>
            <person name="Kornhauser J."/>
            <person name="Jia X."/>
            <person name="Ren J."/>
            <person name="Beausoleil S.A."/>
            <person name="Silva J.C."/>
            <person name="Vemulapalli V."/>
            <person name="Bedford M.T."/>
            <person name="Comb M.J."/>
        </authorList>
    </citation>
    <scope>METHYLATION [LARGE SCALE ANALYSIS] AT ARG-745</scope>
    <scope>IDENTIFICATION BY MASS SPECTROMETRY [LARGE SCALE ANALYSIS]</scope>
    <source>
        <tissue>Colon carcinoma</tissue>
    </source>
</reference>
<reference key="40">
    <citation type="journal article" date="2015" name="Proteomics">
        <title>N-terminome analysis of the human mitochondrial proteome.</title>
        <authorList>
            <person name="Vaca Jacome A.S."/>
            <person name="Rabilloud T."/>
            <person name="Schaeffer-Reiss C."/>
            <person name="Rompais M."/>
            <person name="Ayoub D."/>
            <person name="Lane L."/>
            <person name="Bairoch A."/>
            <person name="Van Dorsselaer A."/>
            <person name="Carapito C."/>
        </authorList>
    </citation>
    <scope>ACETYLATION [LARGE SCALE ANALYSIS] AT ALA-2</scope>
    <scope>CLEAVAGE OF INITIATOR METHIONINE [LARGE SCALE ANALYSIS]</scope>
    <scope>IDENTIFICATION BY MASS SPECTROMETRY [LARGE SCALE ANALYSIS]</scope>
</reference>
<reference key="41">
    <citation type="journal article" date="2015" name="J. Infect. Dis.">
        <title>ALIX Rescues Budding of a Double PTAP/PPEY L-Domain Deletion Mutant of Ebola VP40: A Role for ALIX in Ebola Virus Egress.</title>
        <authorList>
            <person name="Han Z."/>
            <person name="Madara J.J."/>
            <person name="Liu Y."/>
            <person name="Liu W."/>
            <person name="Ruthel G."/>
            <person name="Freedman B.D."/>
            <person name="Harty R.N."/>
        </authorList>
    </citation>
    <scope>INTERACTION WITH EBOLA VIRUS PROTEIN VP40 (MICROBIAL INFECTION)</scope>
</reference>
<reference key="42">
    <citation type="journal article" date="2015" name="Nat. Cell Biol.">
        <title>ATG12-ATG3 interacts with Alix to promote basal autophagic flux and late endosome function.</title>
        <authorList>
            <person name="Murrow L."/>
            <person name="Malhotra R."/>
            <person name="Debnath J."/>
        </authorList>
    </citation>
    <scope>INTERACTION WITH ATG3</scope>
</reference>
<reference key="43">
    <citation type="journal article" date="2020" name="Clin. Genet.">
        <title>PDCD6IP, encoding a regulator of the ESCRT complex, is mutated in microcephaly.</title>
        <authorList>
            <person name="Khan A."/>
            <person name="Alaamery M."/>
            <person name="Massadeh S."/>
            <person name="Obaid A."/>
            <person name="Kashgari A.A."/>
            <person name="Walsh C.A."/>
            <person name="Eyaid W."/>
        </authorList>
    </citation>
    <scope>INVOLVEMENT IN MCPH29</scope>
</reference>
<reference key="44">
    <citation type="journal article" date="2007" name="Cell">
        <title>Structural and biochemical studies of ALIX/AIP1 and its role in retrovirus budding.</title>
        <authorList>
            <person name="Fisher R.D."/>
            <person name="Chung H.Y."/>
            <person name="Zhai Q."/>
            <person name="Robinson H."/>
            <person name="Sundquist W.I."/>
            <person name="Hill C.P."/>
        </authorList>
    </citation>
    <scope>X-RAY CRYSTALLOGRAPHY (3.3 ANGSTROMS) OF 1-698</scope>
    <scope>INTERACTION WITH CHMP4A; HIV-1 P6; EIAV P9; TSG101; SH3GL1 AND SH3GL2</scope>
    <scope>MUTAGENESIS OF ILE-212; TYR-319; PHE-495; VAL-498; VAL-509; PHE-676; LEU-680; ILE-683; PRO-720 AND 757-ARG-PRO-758</scope>
</reference>
<reference key="45">
    <citation type="journal article" date="2007" name="Nat. Struct. Mol. Biol.">
        <title>Structural basis for viral late-domain binding to Alix.</title>
        <authorList>
            <person name="Lee S."/>
            <person name="Joshi A."/>
            <person name="Nagashima K."/>
            <person name="Freed E.O."/>
            <person name="Hurley J.H."/>
        </authorList>
    </citation>
    <scope>X-RAY CRYSTALLOGRAPHY (2.87 ANGSTROMS) OF 360-702</scope>
    <scope>INTERACTION WITH HIV-1 P6</scope>
    <scope>MUTAGENESIS OF VAL-498; VAL-509; CYS-512; PHE-676 AND ILE-683</scope>
</reference>
<reference key="46">
    <citation type="journal article" date="2008" name="Nat. Struct. Mol. Biol.">
        <title>Structural and functional studies of ALIX interactions with YPX(n)L late domains of HIV-1 and EIAV.</title>
        <authorList>
            <person name="Zhai Q."/>
            <person name="Fisher R.D."/>
            <person name="Chung H.Y."/>
            <person name="Myszka D.G."/>
            <person name="Sundquist W.I."/>
            <person name="Hill C.P."/>
        </authorList>
    </citation>
    <scope>X-RAY CRYSTALLOGRAPHY (2.59 ANGSTROMS) OF 2-698 IN COMPLEX WITH HIV-1 P6</scope>
    <scope>X-RAY CRYSTALLOGRAPHY (2.59 ANGSTROMS) OF 2-698 IN COMPLEX WITH HIV-1 P9</scope>
    <scope>INTERACTION WITH EIAV P9</scope>
</reference>
<reference key="47">
    <citation type="journal article" date="2008" name="Proc. Natl. Acad. Sci. U.S.A.">
        <title>ALIX-CHMP4 interactions in the human ESCRT pathway.</title>
        <authorList>
            <person name="McCullough J."/>
            <person name="Fisher R.D."/>
            <person name="Whitby F.G."/>
            <person name="Sundquist W.I."/>
            <person name="Hill C.P."/>
        </authorList>
    </citation>
    <scope>X-RAY CRYSTALLOGRAPHY (2.15 ANGSTROMS) OF 1-359 IN COMPLEX WITH CHMP4A</scope>
    <scope>X-RAY CRYSTALLOGRAPHY (2.1 ANGSTROMS) OF 1-359 IN COMPLEX WITH CHMP4B</scope>
    <scope>X-RAY CRYSTALLOGRAPHY (2.02 ANGSTROMS) OF 1-359 IN COMPLEX WITH CHMP4C</scope>
</reference>
<reference key="48">
    <citation type="journal article" date="2008" name="Science">
        <title>Midbody targeting of the ESCRT machinery by a noncanonical coiled coil in CEP55.</title>
        <authorList>
            <person name="Lee H.H."/>
            <person name="Elia N."/>
            <person name="Ghirlando R."/>
            <person name="Lippincott-Schwartz J."/>
            <person name="Hurley J.H."/>
        </authorList>
    </citation>
    <scope>X-RAY CRYSTALLOGRAPHY (2.00 ANGSTROMS) OF 797-809 IN COMPLEX WITH CEP55</scope>
    <scope>MUTAGENESIS OF PRO-801; PRO-802 AND TYR-806</scope>
</reference>
<reference key="49">
    <citation type="journal article" date="2008" name="Structure">
        <title>Structural basis for Ca2+ -dependent formation of ALG-2/Alix peptide complex: Ca2+/EF3-driven arginine switch mechanism.</title>
        <authorList>
            <person name="Suzuki H."/>
            <person name="Kawasaki M."/>
            <person name="Inuzuka T."/>
            <person name="Okumura M."/>
            <person name="Kakiuchi T."/>
            <person name="Shibata H."/>
            <person name="Wakatsuki S."/>
            <person name="Maki M."/>
        </authorList>
    </citation>
    <scope>X-RAY CRYSTALLOGRAPHY (2.2 ANGSTROMS) OF 799-812 IN COMPLEX WITH PDCD6</scope>
</reference>
<reference key="50">
    <citation type="journal article" date="2011" name="PLoS ONE">
        <title>Exome-sequencing confirms DNAJC5 mutations as cause of adult neuronal ceroid-lipofuscinosis.</title>
        <authorList>
            <person name="Benitez B.A."/>
            <person name="Alvarado D."/>
            <person name="Cai Y."/>
            <person name="Mayo K."/>
            <person name="Chakraverty S."/>
            <person name="Norton J."/>
            <person name="Morris J.C."/>
            <person name="Sands M.S."/>
            <person name="Goate A."/>
            <person name="Cruchaga C."/>
        </authorList>
    </citation>
    <scope>VARIANT SER-429</scope>
</reference>
<gene>
    <name evidence="43" type="primary">PDCD6IP</name>
    <name type="synonym">AIP1</name>
    <name type="synonym">ALIX</name>
    <name type="synonym">KIAA1375</name>
</gene>
<proteinExistence type="evidence at protein level"/>
<protein>
    <recommendedName>
        <fullName evidence="42">Programmed cell death 6-interacting protein</fullName>
        <shortName>PDCD6-interacting protein</shortName>
    </recommendedName>
    <alternativeName>
        <fullName>ALG-2-interacting protein 1</fullName>
    </alternativeName>
    <alternativeName>
        <fullName>ALG-2-interacting protein X</fullName>
    </alternativeName>
    <alternativeName>
        <fullName>Hp95</fullName>
    </alternativeName>
</protein>
<keyword id="KW-0002">3D-structure</keyword>
<keyword id="KW-0007">Acetylation</keyword>
<keyword id="KW-0025">Alternative splicing</keyword>
<keyword id="KW-0053">Apoptosis</keyword>
<keyword id="KW-0131">Cell cycle</keyword>
<keyword id="KW-0132">Cell division</keyword>
<keyword id="KW-0965">Cell junction</keyword>
<keyword id="KW-0963">Cytoplasm</keyword>
<keyword id="KW-0206">Cytoskeleton</keyword>
<keyword id="KW-0903">Direct protein sequencing</keyword>
<keyword id="KW-0945">Host-virus interaction</keyword>
<keyword id="KW-0991">Intellectual disability</keyword>
<keyword id="KW-0488">Methylation</keyword>
<keyword id="KW-0597">Phosphoprotein</keyword>
<keyword id="KW-0905">Primary microcephaly</keyword>
<keyword id="KW-0653">Protein transport</keyword>
<keyword id="KW-1267">Proteomics identification</keyword>
<keyword id="KW-1185">Reference proteome</keyword>
<keyword id="KW-0964">Secreted</keyword>
<keyword id="KW-0796">Tight junction</keyword>
<keyword id="KW-0813">Transport</keyword>
<dbReference type="EMBL" id="AF349951">
    <property type="protein sequence ID" value="AAK20398.1"/>
    <property type="molecule type" value="mRNA"/>
</dbReference>
<dbReference type="EMBL" id="GQ131806">
    <property type="protein sequence ID" value="ACS12984.1"/>
    <property type="molecule type" value="mRNA"/>
</dbReference>
<dbReference type="EMBL" id="AF151793">
    <property type="protein sequence ID" value="AAF08220.1"/>
    <property type="molecule type" value="mRNA"/>
</dbReference>
<dbReference type="EMBL" id="BT007367">
    <property type="protein sequence ID" value="AAP36031.1"/>
    <property type="molecule type" value="mRNA"/>
</dbReference>
<dbReference type="EMBL" id="AC112220">
    <property type="status" value="NOT_ANNOTATED_CDS"/>
    <property type="molecule type" value="Genomic_DNA"/>
</dbReference>
<dbReference type="EMBL" id="AC123901">
    <property type="status" value="NOT_ANNOTATED_CDS"/>
    <property type="molecule type" value="Genomic_DNA"/>
</dbReference>
<dbReference type="EMBL" id="BC020066">
    <property type="protein sequence ID" value="AAH20066.1"/>
    <property type="molecule type" value="mRNA"/>
</dbReference>
<dbReference type="EMBL" id="BC068454">
    <property type="protein sequence ID" value="AAH68454.1"/>
    <property type="molecule type" value="mRNA"/>
</dbReference>
<dbReference type="EMBL" id="AK002122">
    <property type="protein sequence ID" value="BAA92092.1"/>
    <property type="status" value="ALT_INIT"/>
    <property type="molecule type" value="mRNA"/>
</dbReference>
<dbReference type="EMBL" id="AB037796">
    <property type="protein sequence ID" value="BAA92613.1"/>
    <property type="molecule type" value="mRNA"/>
</dbReference>
<dbReference type="CCDS" id="CCDS2660.1">
    <molecule id="Q8WUM4-1"/>
</dbReference>
<dbReference type="CCDS" id="CCDS54561.1">
    <molecule id="Q8WUM4-2"/>
</dbReference>
<dbReference type="RefSeq" id="NP_001155901.1">
    <molecule id="Q8WUM4-2"/>
    <property type="nucleotide sequence ID" value="NM_001162429.3"/>
</dbReference>
<dbReference type="RefSeq" id="NP_001243121.1">
    <molecule id="Q8WUM4-3"/>
    <property type="nucleotide sequence ID" value="NM_001256192.2"/>
</dbReference>
<dbReference type="RefSeq" id="NP_037506.2">
    <molecule id="Q8WUM4-1"/>
    <property type="nucleotide sequence ID" value="NM_013374.5"/>
</dbReference>
<dbReference type="PDB" id="2OEV">
    <property type="method" value="X-ray"/>
    <property type="resolution" value="3.30 A"/>
    <property type="chains" value="A=1-698"/>
</dbReference>
<dbReference type="PDB" id="2OEW">
    <property type="method" value="X-ray"/>
    <property type="resolution" value="2.55 A"/>
    <property type="chains" value="A=1-359"/>
</dbReference>
<dbReference type="PDB" id="2OEX">
    <property type="method" value="X-ray"/>
    <property type="resolution" value="2.58 A"/>
    <property type="chains" value="A/B=360-702"/>
</dbReference>
<dbReference type="PDB" id="2OJQ">
    <property type="method" value="X-ray"/>
    <property type="resolution" value="2.87 A"/>
    <property type="chains" value="A=360-702"/>
</dbReference>
<dbReference type="PDB" id="2R02">
    <property type="method" value="X-ray"/>
    <property type="resolution" value="2.60 A"/>
    <property type="chains" value="A=2-698"/>
</dbReference>
<dbReference type="PDB" id="2R03">
    <property type="method" value="X-ray"/>
    <property type="resolution" value="2.59 A"/>
    <property type="chains" value="A=2-698"/>
</dbReference>
<dbReference type="PDB" id="2R05">
    <property type="method" value="X-ray"/>
    <property type="resolution" value="2.55 A"/>
    <property type="chains" value="A=2-698"/>
</dbReference>
<dbReference type="PDB" id="2XS1">
    <property type="method" value="X-ray"/>
    <property type="resolution" value="2.30 A"/>
    <property type="chains" value="A=1-698"/>
</dbReference>
<dbReference type="PDB" id="2XS8">
    <property type="method" value="X-ray"/>
    <property type="resolution" value="2.50 A"/>
    <property type="chains" value="A=1-698"/>
</dbReference>
<dbReference type="PDB" id="2ZNE">
    <property type="method" value="X-ray"/>
    <property type="resolution" value="2.20 A"/>
    <property type="chains" value="C/D=799-812"/>
</dbReference>
<dbReference type="PDB" id="3C3O">
    <property type="method" value="X-ray"/>
    <property type="resolution" value="2.15 A"/>
    <property type="chains" value="A=1-359"/>
</dbReference>
<dbReference type="PDB" id="3C3Q">
    <property type="method" value="X-ray"/>
    <property type="resolution" value="2.10 A"/>
    <property type="chains" value="A=1-359"/>
</dbReference>
<dbReference type="PDB" id="3C3R">
    <property type="method" value="X-ray"/>
    <property type="resolution" value="2.02 A"/>
    <property type="chains" value="A=1-359"/>
</dbReference>
<dbReference type="PDB" id="3E1R">
    <property type="method" value="X-ray"/>
    <property type="resolution" value="2.00 A"/>
    <property type="chains" value="C=797-809"/>
</dbReference>
<dbReference type="PDB" id="3WUV">
    <property type="method" value="X-ray"/>
    <property type="resolution" value="2.79 A"/>
    <property type="chains" value="C/F/I/L/O/R=796-810"/>
</dbReference>
<dbReference type="PDB" id="4JJY">
    <property type="method" value="X-ray"/>
    <property type="resolution" value="6.50 A"/>
    <property type="chains" value="A/B=355-708"/>
</dbReference>
<dbReference type="PDB" id="5V3R">
    <property type="method" value="X-ray"/>
    <property type="resolution" value="1.91 A"/>
    <property type="chains" value="A=1-359"/>
</dbReference>
<dbReference type="PDB" id="5WA1">
    <property type="method" value="X-ray"/>
    <property type="resolution" value="1.87 A"/>
    <property type="chains" value="A=1-358"/>
</dbReference>
<dbReference type="PDB" id="6KP3">
    <property type="method" value="X-ray"/>
    <property type="resolution" value="2.20 A"/>
    <property type="chains" value="A=1-359"/>
</dbReference>
<dbReference type="PDBsum" id="2OEV"/>
<dbReference type="PDBsum" id="2OEW"/>
<dbReference type="PDBsum" id="2OEX"/>
<dbReference type="PDBsum" id="2OJQ"/>
<dbReference type="PDBsum" id="2R02"/>
<dbReference type="PDBsum" id="2R03"/>
<dbReference type="PDBsum" id="2R05"/>
<dbReference type="PDBsum" id="2XS1"/>
<dbReference type="PDBsum" id="2XS8"/>
<dbReference type="PDBsum" id="2ZNE"/>
<dbReference type="PDBsum" id="3C3O"/>
<dbReference type="PDBsum" id="3C3Q"/>
<dbReference type="PDBsum" id="3C3R"/>
<dbReference type="PDBsum" id="3E1R"/>
<dbReference type="PDBsum" id="3WUV"/>
<dbReference type="PDBsum" id="4JJY"/>
<dbReference type="PDBsum" id="5V3R"/>
<dbReference type="PDBsum" id="5WA1"/>
<dbReference type="PDBsum" id="6KP3"/>
<dbReference type="SMR" id="Q8WUM4"/>
<dbReference type="BioGRID" id="115332">
    <property type="interactions" value="248"/>
</dbReference>
<dbReference type="ComplexPortal" id="CPX-3282">
    <property type="entry name" value="Syndecan-1-syntenin-1-ALIX complex"/>
</dbReference>
<dbReference type="CORUM" id="Q8WUM4"/>
<dbReference type="DIP" id="DIP-29327N"/>
<dbReference type="FunCoup" id="Q8WUM4">
    <property type="interactions" value="3071"/>
</dbReference>
<dbReference type="IntAct" id="Q8WUM4">
    <property type="interactions" value="102"/>
</dbReference>
<dbReference type="MINT" id="Q8WUM4"/>
<dbReference type="STRING" id="9606.ENSP00000411825"/>
<dbReference type="MoonDB" id="Q8WUM4">
    <property type="type" value="Predicted"/>
</dbReference>
<dbReference type="GlyGen" id="Q8WUM4">
    <property type="glycosylation" value="10 sites, 1 N-linked glycan (1 site), 1 O-linked glycan (7 sites)"/>
</dbReference>
<dbReference type="iPTMnet" id="Q8WUM4"/>
<dbReference type="MetOSite" id="Q8WUM4"/>
<dbReference type="PhosphoSitePlus" id="Q8WUM4"/>
<dbReference type="SwissPalm" id="Q8WUM4"/>
<dbReference type="BioMuta" id="PDCD6IP"/>
<dbReference type="DMDM" id="31076831"/>
<dbReference type="CPTAC" id="CPTAC-419"/>
<dbReference type="CPTAC" id="CPTAC-420"/>
<dbReference type="jPOST" id="Q8WUM4"/>
<dbReference type="MassIVE" id="Q8WUM4"/>
<dbReference type="PaxDb" id="9606-ENSP00000411825"/>
<dbReference type="PeptideAtlas" id="Q8WUM4"/>
<dbReference type="PRIDE" id="Q8WUM4"/>
<dbReference type="ProteomicsDB" id="20178"/>
<dbReference type="ProteomicsDB" id="74695">
    <molecule id="Q8WUM4-1"/>
</dbReference>
<dbReference type="Pumba" id="Q8WUM4"/>
<dbReference type="Antibodypedia" id="2777">
    <property type="antibodies" value="402 antibodies from 39 providers"/>
</dbReference>
<dbReference type="DNASU" id="10015"/>
<dbReference type="Ensembl" id="ENST00000307296.8">
    <molecule id="Q8WUM4-1"/>
    <property type="protein sequence ID" value="ENSP00000307387.3"/>
    <property type="gene ID" value="ENSG00000170248.15"/>
</dbReference>
<dbReference type="Ensembl" id="ENST00000457054.6">
    <molecule id="Q8WUM4-2"/>
    <property type="protein sequence ID" value="ENSP00000411825.2"/>
    <property type="gene ID" value="ENSG00000170248.15"/>
</dbReference>
<dbReference type="GeneID" id="10015"/>
<dbReference type="KEGG" id="hsa:10015"/>
<dbReference type="MANE-Select" id="ENST00000307296.8">
    <property type="protein sequence ID" value="ENSP00000307387.3"/>
    <property type="RefSeq nucleotide sequence ID" value="NM_013374.6"/>
    <property type="RefSeq protein sequence ID" value="NP_037506.2"/>
</dbReference>
<dbReference type="UCSC" id="uc003cfx.5">
    <molecule id="Q8WUM4-1"/>
    <property type="organism name" value="human"/>
</dbReference>
<dbReference type="AGR" id="HGNC:8766"/>
<dbReference type="CTD" id="10015"/>
<dbReference type="DisGeNET" id="10015"/>
<dbReference type="GeneCards" id="PDCD6IP"/>
<dbReference type="HGNC" id="HGNC:8766">
    <property type="gene designation" value="PDCD6IP"/>
</dbReference>
<dbReference type="HPA" id="ENSG00000170248">
    <property type="expression patterns" value="Low tissue specificity"/>
</dbReference>
<dbReference type="MalaCards" id="PDCD6IP"/>
<dbReference type="MIM" id="608074">
    <property type="type" value="gene"/>
</dbReference>
<dbReference type="MIM" id="620047">
    <property type="type" value="phenotype"/>
</dbReference>
<dbReference type="neXtProt" id="NX_Q8WUM4"/>
<dbReference type="OpenTargets" id="ENSG00000170248"/>
<dbReference type="PharmGKB" id="PA33116"/>
<dbReference type="VEuPathDB" id="HostDB:ENSG00000170248"/>
<dbReference type="eggNOG" id="KOG2220">
    <property type="taxonomic scope" value="Eukaryota"/>
</dbReference>
<dbReference type="GeneTree" id="ENSGT01130000278400"/>
<dbReference type="HOGENOM" id="CLU_007181_2_0_1"/>
<dbReference type="InParanoid" id="Q8WUM4"/>
<dbReference type="OMA" id="VSHAEEM"/>
<dbReference type="OrthoDB" id="2141925at2759"/>
<dbReference type="PAN-GO" id="Q8WUM4">
    <property type="GO annotations" value="2 GO annotations based on evolutionary models"/>
</dbReference>
<dbReference type="PhylomeDB" id="Q8WUM4"/>
<dbReference type="TreeFam" id="TF323502"/>
<dbReference type="PathwayCommons" id="Q8WUM4"/>
<dbReference type="Reactome" id="R-HSA-162588">
    <property type="pathway name" value="Budding and maturation of HIV virion"/>
</dbReference>
<dbReference type="Reactome" id="R-HSA-5210891">
    <property type="pathway name" value="Uptake and function of anthrax toxins"/>
</dbReference>
<dbReference type="Reactome" id="R-HSA-5213460">
    <property type="pathway name" value="RIPK1-mediated regulated necrosis"/>
</dbReference>
<dbReference type="Reactome" id="R-HSA-5675482">
    <property type="pathway name" value="Regulation of necroptotic cell death"/>
</dbReference>
<dbReference type="SignaLink" id="Q8WUM4"/>
<dbReference type="SIGNOR" id="Q8WUM4"/>
<dbReference type="BioGRID-ORCS" id="10015">
    <property type="hits" value="237 hits in 1158 CRISPR screens"/>
</dbReference>
<dbReference type="CD-CODE" id="232F8A39">
    <property type="entry name" value="P-body"/>
</dbReference>
<dbReference type="CD-CODE" id="8C2F96ED">
    <property type="entry name" value="Centrosome"/>
</dbReference>
<dbReference type="CD-CODE" id="DEE660B4">
    <property type="entry name" value="Stress granule"/>
</dbReference>
<dbReference type="CD-CODE" id="FB4E32DD">
    <property type="entry name" value="Presynaptic clusters and postsynaptic densities"/>
</dbReference>
<dbReference type="ChiTaRS" id="PDCD6IP">
    <property type="organism name" value="human"/>
</dbReference>
<dbReference type="EvolutionaryTrace" id="Q8WUM4"/>
<dbReference type="GeneWiki" id="PDCD6IP"/>
<dbReference type="GenomeRNAi" id="10015"/>
<dbReference type="Pharos" id="Q8WUM4">
    <property type="development level" value="Tbio"/>
</dbReference>
<dbReference type="PRO" id="PR:Q8WUM4"/>
<dbReference type="Proteomes" id="UP000005640">
    <property type="component" value="Chromosome 3"/>
</dbReference>
<dbReference type="RNAct" id="Q8WUM4">
    <property type="molecule type" value="protein"/>
</dbReference>
<dbReference type="Bgee" id="ENSG00000170248">
    <property type="expression patterns" value="Expressed in calcaneal tendon and 211 other cell types or tissues"/>
</dbReference>
<dbReference type="ExpressionAtlas" id="Q8WUM4">
    <property type="expression patterns" value="baseline and differential"/>
</dbReference>
<dbReference type="GO" id="GO:0042641">
    <property type="term" value="C:actomyosin"/>
    <property type="evidence" value="ECO:0000250"/>
    <property type="project" value="UniProtKB"/>
</dbReference>
<dbReference type="GO" id="GO:0005923">
    <property type="term" value="C:bicellular tight junction"/>
    <property type="evidence" value="ECO:0007669"/>
    <property type="project" value="UniProtKB-SubCell"/>
</dbReference>
<dbReference type="GO" id="GO:0005813">
    <property type="term" value="C:centrosome"/>
    <property type="evidence" value="ECO:0007669"/>
    <property type="project" value="UniProtKB-SubCell"/>
</dbReference>
<dbReference type="GO" id="GO:0005829">
    <property type="term" value="C:cytosol"/>
    <property type="evidence" value="ECO:0000304"/>
    <property type="project" value="Reactome"/>
</dbReference>
<dbReference type="GO" id="GO:0070971">
    <property type="term" value="C:endoplasmic reticulum exit site"/>
    <property type="evidence" value="ECO:0000315"/>
    <property type="project" value="UniProtKB"/>
</dbReference>
<dbReference type="GO" id="GO:0005768">
    <property type="term" value="C:endosome"/>
    <property type="evidence" value="ECO:0000318"/>
    <property type="project" value="GO_Central"/>
</dbReference>
<dbReference type="GO" id="GO:0070062">
    <property type="term" value="C:extracellular exosome"/>
    <property type="evidence" value="ECO:0000314"/>
    <property type="project" value="UniProtKB"/>
</dbReference>
<dbReference type="GO" id="GO:1903561">
    <property type="term" value="C:extracellular vesicle"/>
    <property type="evidence" value="ECO:0007005"/>
    <property type="project" value="UniProtKB"/>
</dbReference>
<dbReference type="GO" id="GO:0090543">
    <property type="term" value="C:Flemming body"/>
    <property type="evidence" value="ECO:0000314"/>
    <property type="project" value="UniProtKB"/>
</dbReference>
<dbReference type="GO" id="GO:0005925">
    <property type="term" value="C:focal adhesion"/>
    <property type="evidence" value="ECO:0007005"/>
    <property type="project" value="UniProtKB"/>
</dbReference>
<dbReference type="GO" id="GO:0001772">
    <property type="term" value="C:immunological synapse"/>
    <property type="evidence" value="ECO:0000314"/>
    <property type="project" value="BHF-UCL"/>
</dbReference>
<dbReference type="GO" id="GO:0042470">
    <property type="term" value="C:melanosome"/>
    <property type="evidence" value="ECO:0007669"/>
    <property type="project" value="UniProtKB-SubCell"/>
</dbReference>
<dbReference type="GO" id="GO:0016020">
    <property type="term" value="C:membrane"/>
    <property type="evidence" value="ECO:0007005"/>
    <property type="project" value="UniProtKB"/>
</dbReference>
<dbReference type="GO" id="GO:0048306">
    <property type="term" value="F:calcium-dependent protein binding"/>
    <property type="evidence" value="ECO:0000353"/>
    <property type="project" value="UniProtKB"/>
</dbReference>
<dbReference type="GO" id="GO:0042803">
    <property type="term" value="F:protein homodimerization activity"/>
    <property type="evidence" value="ECO:0000353"/>
    <property type="project" value="UniProtKB"/>
</dbReference>
<dbReference type="GO" id="GO:0031871">
    <property type="term" value="F:proteinase activated receptor binding"/>
    <property type="evidence" value="ECO:0000353"/>
    <property type="project" value="UniProtKB"/>
</dbReference>
<dbReference type="GO" id="GO:0000915">
    <property type="term" value="P:actomyosin contractile ring assembly"/>
    <property type="evidence" value="ECO:0000250"/>
    <property type="project" value="UniProtKB"/>
</dbReference>
<dbReference type="GO" id="GO:0006915">
    <property type="term" value="P:apoptotic process"/>
    <property type="evidence" value="ECO:0007669"/>
    <property type="project" value="UniProtKB-KW"/>
</dbReference>
<dbReference type="GO" id="GO:0070830">
    <property type="term" value="P:bicellular tight junction assembly"/>
    <property type="evidence" value="ECO:0000250"/>
    <property type="project" value="UniProtKB"/>
</dbReference>
<dbReference type="GO" id="GO:0097734">
    <property type="term" value="P:extracellular exosome biogenesis"/>
    <property type="evidence" value="ECO:0000250"/>
    <property type="project" value="UniProtKB"/>
</dbReference>
<dbReference type="GO" id="GO:0016236">
    <property type="term" value="P:macroautophagy"/>
    <property type="evidence" value="ECO:0000250"/>
    <property type="project" value="UniProtKB"/>
</dbReference>
<dbReference type="GO" id="GO:0045199">
    <property type="term" value="P:maintenance of epithelial cell apical/basal polarity"/>
    <property type="evidence" value="ECO:0000250"/>
    <property type="project" value="UniProtKB"/>
</dbReference>
<dbReference type="GO" id="GO:0061952">
    <property type="term" value="P:midbody abscission"/>
    <property type="evidence" value="ECO:0000315"/>
    <property type="project" value="UniProtKB"/>
</dbReference>
<dbReference type="GO" id="GO:0000281">
    <property type="term" value="P:mitotic cytokinesis"/>
    <property type="evidence" value="ECO:0000314"/>
    <property type="project" value="UniProtKB"/>
</dbReference>
<dbReference type="GO" id="GO:0036258">
    <property type="term" value="P:multivesicular body assembly"/>
    <property type="evidence" value="ECO:0000303"/>
    <property type="project" value="ParkinsonsUK-UCL"/>
</dbReference>
<dbReference type="GO" id="GO:1903543">
    <property type="term" value="P:positive regulation of exosomal secretion"/>
    <property type="evidence" value="ECO:0000315"/>
    <property type="project" value="UniProtKB"/>
</dbReference>
<dbReference type="GO" id="GO:1903553">
    <property type="term" value="P:positive regulation of extracellular exosome assembly"/>
    <property type="evidence" value="ECO:0000315"/>
    <property type="project" value="UniProtKB"/>
</dbReference>
<dbReference type="GO" id="GO:0051260">
    <property type="term" value="P:protein homooligomerization"/>
    <property type="evidence" value="ECO:0000314"/>
    <property type="project" value="UniProtKB"/>
</dbReference>
<dbReference type="GO" id="GO:0015031">
    <property type="term" value="P:protein transport"/>
    <property type="evidence" value="ECO:0007669"/>
    <property type="project" value="UniProtKB-KW"/>
</dbReference>
<dbReference type="GO" id="GO:0010824">
    <property type="term" value="P:regulation of centrosome duplication"/>
    <property type="evidence" value="ECO:0000315"/>
    <property type="project" value="UniProtKB"/>
</dbReference>
<dbReference type="GO" id="GO:1903551">
    <property type="term" value="P:regulation of extracellular exosome assembly"/>
    <property type="evidence" value="ECO:0000315"/>
    <property type="project" value="UniProtKB"/>
</dbReference>
<dbReference type="GO" id="GO:0090559">
    <property type="term" value="P:regulation of membrane permeability"/>
    <property type="evidence" value="ECO:0000250"/>
    <property type="project" value="UniProtKB"/>
</dbReference>
<dbReference type="GO" id="GO:0090611">
    <property type="term" value="P:ubiquitin-independent protein catabolic process via the multivesicular body sorting pathway"/>
    <property type="evidence" value="ECO:0000315"/>
    <property type="project" value="UniProtKB"/>
</dbReference>
<dbReference type="GO" id="GO:0046755">
    <property type="term" value="P:viral budding"/>
    <property type="evidence" value="ECO:0000314"/>
    <property type="project" value="UniProtKB"/>
</dbReference>
<dbReference type="GO" id="GO:0039702">
    <property type="term" value="P:viral budding via host ESCRT complex"/>
    <property type="evidence" value="ECO:0000316"/>
    <property type="project" value="UniProtKB"/>
</dbReference>
<dbReference type="CDD" id="cd09240">
    <property type="entry name" value="BRO1_Alix"/>
    <property type="match status" value="1"/>
</dbReference>
<dbReference type="CDD" id="cd09235">
    <property type="entry name" value="V_Alix"/>
    <property type="match status" value="1"/>
</dbReference>
<dbReference type="FunFam" id="1.25.40.280:FF:000001">
    <property type="entry name" value="programmed cell death 6-interacting protein-like isoform X1"/>
    <property type="match status" value="1"/>
</dbReference>
<dbReference type="FunFam" id="1.20.140.50:FF:000001">
    <property type="entry name" value="programmed cell death 6-interacting protein-like isoform X2"/>
    <property type="match status" value="1"/>
</dbReference>
<dbReference type="Gene3D" id="1.20.120.560">
    <property type="entry name" value="alix/aip1 in complex with the ypdl late domain"/>
    <property type="match status" value="1"/>
</dbReference>
<dbReference type="Gene3D" id="1.20.140.50">
    <property type="entry name" value="alix/aip1 like domains"/>
    <property type="match status" value="1"/>
</dbReference>
<dbReference type="Gene3D" id="1.25.40.280">
    <property type="entry name" value="alix/aip1 like domains"/>
    <property type="match status" value="1"/>
</dbReference>
<dbReference type="InterPro" id="IPR025304">
    <property type="entry name" value="ALIX_V_dom"/>
</dbReference>
<dbReference type="InterPro" id="IPR004328">
    <property type="entry name" value="BRO1_dom"/>
</dbReference>
<dbReference type="InterPro" id="IPR038499">
    <property type="entry name" value="BRO1_sf"/>
</dbReference>
<dbReference type="PANTHER" id="PTHR23030">
    <property type="entry name" value="PCD6 INTERACTING PROTEIN-RELATED"/>
    <property type="match status" value="1"/>
</dbReference>
<dbReference type="PANTHER" id="PTHR23030:SF39">
    <property type="entry name" value="PROGRAMMED CELL DEATH 6-INTERACTING PROTEIN"/>
    <property type="match status" value="1"/>
</dbReference>
<dbReference type="Pfam" id="PF13949">
    <property type="entry name" value="ALIX_LYPXL_bnd"/>
    <property type="match status" value="1"/>
</dbReference>
<dbReference type="Pfam" id="PF03097">
    <property type="entry name" value="BRO1"/>
    <property type="match status" value="1"/>
</dbReference>
<dbReference type="SMART" id="SM01041">
    <property type="entry name" value="BRO1"/>
    <property type="match status" value="1"/>
</dbReference>
<dbReference type="PROSITE" id="PS51180">
    <property type="entry name" value="BRO1"/>
    <property type="match status" value="1"/>
</dbReference>
<comment type="function">
    <text evidence="2 14 23 24 28 35">Multifunctional protein involved in endocytosis, multivesicular body biogenesis, membrane repair, cytokinesis, apoptosis and maintenance of tight junction integrity. Class E VPS protein involved in concentration and sorting of cargo proteins of the multivesicular body (MVB) for incorporation into intralumenal vesicles (ILVs) that are generated by invagination and scission from the limiting membrane of the endosome. Binds to the phospholipid lysobisphosphatidic acid (LBPA) which is abundant in MVBs internal membranes. The MVB pathway requires the sequential function of ESCRT-O, -I,-II and -III complexes (PubMed:14739459). The ESCRT machinery also functions in topologically equivalent membrane fission events, such as the terminal stages of cytokinesis (PubMed:17556548, PubMed:17853893). Adapter for a subset of ESCRT-III proteins, such as CHMP4, to function at distinct membranes. Required for completion of cytokinesis (PubMed:17556548, PubMed:17853893, PubMed:18641129). May play a role in the regulation of both apoptosis and cell proliferation. Regulates exosome biogenesis in concert with SDC1/4 and SDCBP (PubMed:22660413). By interacting with F-actin, PARD3 and TJP1 secures the proper assembly and positioning of actomyosin-tight junction complex at the apical sides of adjacent epithelial cells that defines a spatial membrane domain essential for the maintenance of epithelial cell polarity and barrier (By similarity).</text>
</comment>
<comment type="function">
    <text evidence="8 9 10 23 28">(Microbial infection) Involved in HIV-1 virus budding. Can replace TSG101 it its role of supporting HIV-1 release; this function requires the interaction with CHMP4B. The ESCRT machinery also functions in topologically equivalent membrane fission events, such as enveloped virus budding (HIV-1 and other lentiviruses).</text>
</comment>
<comment type="subunit">
    <text evidence="1 2 7 8 9 10 11 12 16 18 21 22 23 24 26 27 28 29 30 31 32 33 35 36">Self-associates (PubMed:14505570, PubMed:14519844). Interacts with SH3KBP1/CIN85 (By similarity). Interacts with PDCD6 in a calcium -dependent manner (PubMed:16957052, PubMed:18256029, PubMed:18940611). Interacts with TSG101 in a calcium-dependent manner; PDCD6IP homooligomerization may be required for TSG101-binding (PubMed:14505570, PubMed:14519844, PubMed:17350572, PubMed:18641129, PubMed:19520058). Interacts with SGSM3 (PubMed:15849434). Directly interacts with CHMP4A, CHMP4B and CHMP4C (PubMed:12860994, PubMed:14505569, PubMed:14505570, PubMed:14519844, PubMed:14583093, PubMed:14678797, PubMed:17350572, PubMed:17428861, PubMed:18511562). Directly interacts with CEP55 in a 1:2 stoechiometry (PubMed:17556548, PubMed:17853893, PubMed:18641129, PubMed:18948538). The interaction with CEP55 is required for PDCD6IP targeting to the midbody (PubMed:18641129). May interact with PDGFRB (PubMed:20494825). Interacts with SH3GL1 and SH3GL2/endophilin-1 (PubMed:17350572). Forms a complex with SDCBP and SDC2 (PubMed:22660413). Found in a complex with F-actin, TJP1/ZO-1 and PARD3 (By similarity). Interacts with CD2AP (PubMed:17853893). Interacts with ARRDC1 (PubMed:21191027). Interacts (via BRO1 domain) with the ATG12-ATG3 conjugate; this interaction is bridged by ATG12 and promotes multiple PDCD6IP-mediated functions such as endolysosomal trafficking, macroautophagy and exosome biogenesis (PubMed:25686249).</text>
</comment>
<comment type="subunit">
    <text evidence="8 10 20 21 25">(Microbial infection) Interacts with HIV-1 p6 (PubMed:14505569, PubMed:17277784, PubMed:17350572, PubMed:18066081). Interacts with HIV-1 p9 (PubMed:18066081).</text>
</comment>
<comment type="subunit">
    <text evidence="8 10 21 25">(Microbial infection) Interacts with EIAV p9.</text>
</comment>
<comment type="subunit">
    <text evidence="17">(Microbial infection) Interacts with Murine leukemia virus Gag polyprotein (via LYPX(n)L motif).</text>
</comment>
<comment type="subunit">
    <text evidence="17">(Microbial infection) Interacts with ebola virus protein VP40 (via YPx(n)L/I motif).</text>
</comment>
<comment type="interaction">
    <interactant intactId="EBI-310624">
        <id>Q8WUM4</id>
    </interactant>
    <interactant intactId="EBI-298152">
        <id>Q9Y5K6</id>
        <label>CD2AP</label>
    </interactant>
    <organismsDiffer>false</organismsDiffer>
    <experiments>3</experiments>
</comment>
<comment type="interaction">
    <interactant intactId="EBI-310624">
        <id>Q8WUM4</id>
    </interactant>
    <interactant intactId="EBI-747776">
        <id>Q53EZ4</id>
        <label>CEP55</label>
    </interactant>
    <organismsDiffer>false</organismsDiffer>
    <experiments>22</experiments>
</comment>
<comment type="interaction">
    <interactant intactId="EBI-310624">
        <id>Q8WUM4</id>
    </interactant>
    <interactant intactId="EBI-747981">
        <id>Q9BY43</id>
        <label>CHMP4A</label>
    </interactant>
    <organismsDiffer>false</organismsDiffer>
    <experiments>3</experiments>
</comment>
<comment type="interaction">
    <interactant intactId="EBI-310624">
        <id>Q8WUM4</id>
    </interactant>
    <interactant intactId="EBI-749627">
        <id>Q9H444</id>
        <label>CHMP4B</label>
    </interactant>
    <organismsDiffer>false</organismsDiffer>
    <experiments>6</experiments>
</comment>
<comment type="interaction">
    <interactant intactId="EBI-310624">
        <id>Q8WUM4</id>
    </interactant>
    <interactant intactId="EBI-1221015">
        <id>Q96CF2</id>
        <label>CHMP4C</label>
    </interactant>
    <organismsDiffer>false</organismsDiffer>
    <experiments>3</experiments>
</comment>
<comment type="interaction">
    <interactant intactId="EBI-310624">
        <id>Q8WUM4</id>
    </interactant>
    <interactant intactId="EBI-515315">
        <id>P06241</id>
        <label>FYN</label>
    </interactant>
    <organismsDiffer>false</organismsDiffer>
    <experiments>6</experiments>
</comment>
<comment type="interaction">
    <interactant intactId="EBI-310624">
        <id>Q8WUM4</id>
    </interactant>
    <interactant intactId="EBI-346340">
        <id>P08631</id>
        <label>HCK</label>
    </interactant>
    <organismsDiffer>false</organismsDiffer>
    <experiments>4</experiments>
</comment>
<comment type="interaction">
    <interactant intactId="EBI-310624">
        <id>Q8WUM4</id>
    </interactant>
    <interactant intactId="EBI-1170392">
        <id>P17931</id>
        <label>LGALS3</label>
    </interactant>
    <organismsDiffer>false</organismsDiffer>
    <experiments>2</experiments>
</comment>
<comment type="interaction">
    <interactant intactId="EBI-310624">
        <id>Q8WUM4</id>
    </interactant>
    <interactant intactId="EBI-352915">
        <id>O75340</id>
        <label>PDCD6</label>
    </interactant>
    <organismsDiffer>false</organismsDiffer>
    <experiments>13</experiments>
</comment>
<comment type="interaction">
    <interactant intactId="EBI-310624">
        <id>Q8WUM4</id>
    </interactant>
    <interactant intactId="EBI-346882">
        <id>Q99816</id>
        <label>TSG101</label>
    </interactant>
    <organismsDiffer>false</organismsDiffer>
    <experiments>2</experiments>
</comment>
<comment type="interaction">
    <interactant intactId="EBI-310624">
        <id>Q8WUM4</id>
    </interactant>
    <interactant intactId="EBI-8322817">
        <id>Q9D8B3</id>
        <label>Chmp4b</label>
    </interactant>
    <organismsDiffer>true</organismsDiffer>
    <experiments>2</experiments>
</comment>
<comment type="interaction">
    <interactant intactId="EBI-310624">
        <id>Q8WUM4</id>
    </interactant>
    <interactant intactId="EBI-40204927">
        <id>O91079</id>
        <label>gag</label>
    </interactant>
    <organismsDiffer>true</organismsDiffer>
    <experiments>7</experiments>
</comment>
<comment type="interaction">
    <interactant intactId="EBI-310624">
        <id>Q8WUM4</id>
    </interactant>
    <interactant intactId="EBI-1220741">
        <id>P03347</id>
        <label>gag</label>
    </interactant>
    <organismsDiffer>true</organismsDiffer>
    <experiments>2</experiments>
</comment>
<comment type="interaction">
    <interactant intactId="EBI-310624">
        <id>Q8WUM4</id>
    </interactant>
    <interactant intactId="EBI-1220941">
        <id>P69730</id>
        <label>gag</label>
    </interactant>
    <organismsDiffer>true</organismsDiffer>
    <experiments>2</experiments>
</comment>
<comment type="interaction">
    <interactant intactId="EBI-310624">
        <id>Q8WUM4</id>
    </interactant>
    <interactant intactId="EBI-3957603">
        <id>P09022</id>
        <label>Hoxa1</label>
    </interactant>
    <organismsDiffer>true</organismsDiffer>
    <experiments>3</experiments>
</comment>
<comment type="interaction">
    <interactant intactId="EBI-310624">
        <id>Q8WUM4</id>
    </interactant>
    <interactant intactId="EBI-7460704">
        <id>Q90VU7</id>
        <label>nef</label>
    </interactant>
    <organismsDiffer>true</organismsDiffer>
    <experiments>4</experiments>
</comment>
<comment type="interaction">
    <interactant intactId="EBI-310624">
        <id>Q8WUM4</id>
    </interactant>
    <interactant intactId="EBI-8826747">
        <id>PRO_0000308465</id>
        <dbReference type="UniProtKB" id="P29991"/>
    </interactant>
    <organismsDiffer>true</organismsDiffer>
    <experiments>3</experiments>
</comment>
<comment type="subcellular location">
    <subcellularLocation>
        <location evidence="1">Cytoplasm</location>
        <location evidence="1">Cytosol</location>
    </subcellularLocation>
    <subcellularLocation>
        <location evidence="19">Melanosome</location>
    </subcellularLocation>
    <subcellularLocation>
        <location evidence="23 24">Cytoplasm</location>
        <location evidence="23 24">Cytoskeleton</location>
        <location evidence="23 24">Microtubule organizing center</location>
        <location evidence="23 24">Centrosome</location>
    </subcellularLocation>
    <subcellularLocation>
        <location evidence="35">Secreted</location>
        <location evidence="35">Extracellular exosome</location>
    </subcellularLocation>
    <subcellularLocation>
        <location evidence="2">Cell junction</location>
        <location evidence="2">Tight junction</location>
    </subcellularLocation>
    <subcellularLocation>
        <location evidence="24 28">Midbody</location>
        <location evidence="24 28">Midbody ring</location>
    </subcellularLocation>
    <text evidence="1 2 19 23 24 28">Identified by mass spectrometry in melanosome fractions from stage I to stage IV. Colocalized with CEP55 at centrosomes of non-dividing cells. Component of the actomyosin-tight junction complex (By similarity). PDCD6IP targeting to the midbody requires the interaction with CEP55 (PubMed:18641129).</text>
</comment>
<comment type="alternative products">
    <event type="alternative splicing"/>
    <isoform>
        <id>Q8WUM4-1</id>
        <name>1</name>
        <sequence type="displayed"/>
    </isoform>
    <isoform>
        <id>Q8WUM4-2</id>
        <name>2</name>
        <sequence type="described" ref="VSP_044860"/>
    </isoform>
    <isoform>
        <id>Q8WUM4-3</id>
        <name>3</name>
        <sequence type="described" ref="VSP_057190 VSP_057191"/>
    </isoform>
</comment>
<comment type="PTM">
    <text evidence="32">May be phosphorylated on tyrosine residues by activated PDGFRB.</text>
</comment>
<comment type="disease" evidence="37">
    <disease id="DI-06509">
        <name>Microcephaly 29, primary, autosomal recessive</name>
        <acronym>MCPH29</acronym>
        <description>A form of microcephaly, a disease defined as a head circumference more than 3 standard deviations below the age, sex and ethnically matched mean. Brain weight is markedly reduced and the cerebral cortex is disproportionately small. MCPH29 is characterized by small head circumference apparent at birth and associated with global developmental delay, impaired intellectual development, speech delay, and behavioral abnormalities. Affected individuals also have poor overall growth with short stature, mild dysmorphic facial features, and seizures.</description>
        <dbReference type="MIM" id="620047"/>
    </disease>
    <text>The disease may be caused by variants affecting the gene represented in this entry.</text>
</comment>
<comment type="sequence caution" evidence="42">
    <conflict type="erroneous initiation">
        <sequence resource="EMBL-CDS" id="BAA92092"/>
    </conflict>
    <text>Truncated N-terminus.</text>
</comment>
<organism>
    <name type="scientific">Homo sapiens</name>
    <name type="common">Human</name>
    <dbReference type="NCBI Taxonomy" id="9606"/>
    <lineage>
        <taxon>Eukaryota</taxon>
        <taxon>Metazoa</taxon>
        <taxon>Chordata</taxon>
        <taxon>Craniata</taxon>
        <taxon>Vertebrata</taxon>
        <taxon>Euteleostomi</taxon>
        <taxon>Mammalia</taxon>
        <taxon>Eutheria</taxon>
        <taxon>Euarchontoglires</taxon>
        <taxon>Primates</taxon>
        <taxon>Haplorrhini</taxon>
        <taxon>Catarrhini</taxon>
        <taxon>Hominidae</taxon>
        <taxon>Homo</taxon>
    </lineage>
</organism>
<accession>Q8WUM4</accession>
<accession>C5MQH7</accession>
<accession>E9PFU1</accession>
<accession>Q6NUS1</accession>
<accession>Q9BX86</accession>
<accession>Q9NUN0</accession>
<accession>Q9P2H2</accession>
<accession>Q9UKL5</accession>
<name>PDC6I_HUMAN</name>
<feature type="initiator methionine" description="Removed" evidence="39 45 48 51">
    <location>
        <position position="1"/>
    </location>
</feature>
<feature type="chain" id="PRO_0000218891" description="Programmed cell death 6-interacting protein">
    <location>
        <begin position="2"/>
        <end position="868"/>
    </location>
</feature>
<feature type="domain" description="BRO1" evidence="3">
    <location>
        <begin position="3"/>
        <end position="392"/>
    </location>
</feature>
<feature type="region of interest" description="Interaction with EIAV p9">
    <location>
        <begin position="176"/>
        <end position="868"/>
    </location>
</feature>
<feature type="region of interest" description="Interaction with CHMP4A, CHMP4B and CHMP4C">
    <location>
        <begin position="176"/>
        <end position="503"/>
    </location>
</feature>
<feature type="region of interest" description="Interaction with SDCBP" evidence="35">
    <location>
        <begin position="418"/>
        <end position="868"/>
    </location>
</feature>
<feature type="region of interest" description="Self-association">
    <location>
        <begin position="503"/>
        <end position="868"/>
    </location>
</feature>
<feature type="region of interest" description="Disordered" evidence="4">
    <location>
        <begin position="713"/>
        <end position="809"/>
    </location>
</feature>
<feature type="region of interest" description="Interaction with TSG101">
    <location>
        <begin position="717"/>
        <end position="720"/>
    </location>
</feature>
<feature type="region of interest" description="Interaction with CEP55" evidence="28">
    <location>
        <begin position="801"/>
        <end position="806"/>
    </location>
</feature>
<feature type="region of interest" description="Disordered" evidence="4">
    <location>
        <begin position="832"/>
        <end position="868"/>
    </location>
</feature>
<feature type="region of interest" description="Essential to promote virus budding">
    <location>
        <begin position="864"/>
        <end position="868"/>
    </location>
</feature>
<feature type="compositionally biased region" description="Pro residues" evidence="4">
    <location>
        <begin position="737"/>
        <end position="763"/>
    </location>
</feature>
<feature type="compositionally biased region" description="Low complexity" evidence="4">
    <location>
        <begin position="778"/>
        <end position="791"/>
    </location>
</feature>
<feature type="compositionally biased region" description="Pro residues" evidence="4">
    <location>
        <begin position="792"/>
        <end position="807"/>
    </location>
</feature>
<feature type="compositionally biased region" description="Pro residues" evidence="4">
    <location>
        <begin position="844"/>
        <end position="860"/>
    </location>
</feature>
<feature type="modified residue" description="N-acetylalanine" evidence="39 45 48 51">
    <location>
        <position position="2"/>
    </location>
</feature>
<feature type="modified residue" description="N6-acetyllysine" evidence="46">
    <location>
        <position position="215"/>
    </location>
</feature>
<feature type="modified residue" description="Phosphothreonine" evidence="49">
    <location>
        <position position="479"/>
    </location>
</feature>
<feature type="modified residue" description="Phosphoserine" evidence="49">
    <location>
        <position position="481"/>
    </location>
</feature>
<feature type="modified residue" description="Phosphoserine" evidence="44">
    <location>
        <position position="730"/>
    </location>
</feature>
<feature type="modified residue" description="Phosphothreonine" evidence="44 47">
    <location>
        <position position="738"/>
    </location>
</feature>
<feature type="modified residue" description="Phosphothreonine" evidence="44 47">
    <location>
        <position position="741"/>
    </location>
</feature>
<feature type="modified residue" description="Omega-N-methylarginine" evidence="50">
    <location>
        <position position="745"/>
    </location>
</feature>
<feature type="splice variant" id="VSP_044860" description="In isoform 2." evidence="40">
    <original>K</original>
    <variation>KYFYFQ</variation>
    <location>
        <position position="239"/>
    </location>
</feature>
<feature type="splice variant" id="VSP_057190" description="In isoform 3." evidence="41">
    <original>EVFPVLAAKHCIMQANAEYHQSILAKQQKKFG</original>
    <variation>VSYCFYKHLLTLHVKYLDFFVYKKQVETYKEI</variation>
    <location>
        <begin position="240"/>
        <end position="271"/>
    </location>
</feature>
<feature type="splice variant" id="VSP_057191" description="In isoform 3." evidence="41">
    <location>
        <begin position="272"/>
        <end position="868"/>
    </location>
</feature>
<feature type="sequence variant" id="VAR_068975" description="In dbSNP:rs11554560." evidence="15">
    <original>V</original>
    <variation>M</variation>
    <location>
        <position position="7"/>
    </location>
</feature>
<feature type="sequence variant" id="VAR_053017" description="In dbSNP:rs3792594." evidence="38">
    <original>A</original>
    <variation>T</variation>
    <location>
        <position position="309"/>
    </location>
</feature>
<feature type="sequence variant" id="VAR_053018" description="In dbSNP:rs3203777." evidence="13 15">
    <original>V</original>
    <variation>I</variation>
    <location>
        <position position="378"/>
    </location>
</feature>
<feature type="sequence variant" id="VAR_069765" description="In dbSNP:rs76608858." evidence="34">
    <original>G</original>
    <variation>S</variation>
    <location>
        <position position="429"/>
    </location>
</feature>
<feature type="sequence variant" id="VAR_053019" description="In dbSNP:rs9813017." evidence="5 6">
    <original>N</original>
    <variation>S</variation>
    <location>
        <position position="550"/>
    </location>
</feature>
<feature type="sequence variant" id="VAR_053020" description="In dbSNP:rs3183982.">
    <original>K</original>
    <variation>E</variation>
    <location>
        <position position="638"/>
    </location>
</feature>
<feature type="sequence variant" id="VAR_024381" description="In dbSNP:rs1127732." evidence="38">
    <original>S</original>
    <variation>L</variation>
    <location>
        <position position="730"/>
    </location>
</feature>
<feature type="mutagenesis site" description="Does not support cytokinesis; loss of normal midbody formation; loss of CHMP4A-, CHMP4B- and CHMP4C-binding in a yeast two-hybrid assay; no effect on localization to the midbody; abolishes rescue of PTAP-type L domain-deficient HIV-1 p6." evidence="22 28">
    <original>F</original>
    <variation>D</variation>
    <location>
        <position position="199"/>
    </location>
</feature>
<feature type="mutagenesis site" description="Does not support cytokinesis; loss of normal midbody formation; loss of CHMP4A-, CHMP4B- and CHMP4C-binding in a yeast two-hybrid assay; impairs rescue of PTAP-type L domain-deficient HIV-1 p6; no effect on localization to the midbody." evidence="21 24 28">
    <original>I</original>
    <variation>D</variation>
    <location>
        <position position="212"/>
    </location>
</feature>
<feature type="mutagenesis site" description="Abolishes interaction with CHMP4B and abolishes rescue of PTAP-type L domain-deficient HIV-1 p6." evidence="22">
    <original>L</original>
    <variation>D</variation>
    <location>
        <position position="216"/>
    </location>
</feature>
<feature type="mutagenesis site" description="Diminishes rescue of PTAP-type L domain-deficient HIV-1 p6." evidence="22">
    <original>F</original>
    <variation>A</variation>
    <location>
        <position position="317"/>
    </location>
</feature>
<feature type="mutagenesis site" description="Greatly diminishes rescue of PTAP-type L domain--deficient HIV-1 p6." evidence="22">
    <original>I</original>
    <variation>A</variation>
    <location>
        <position position="318"/>
    </location>
</feature>
<feature type="mutagenesis site" description="Greatly diminishes rescue of PTAP-type L domain-deficient HIV-1 p6." evidence="21 22">
    <original>Y</original>
    <variation>A</variation>
    <location>
        <position position="319"/>
    </location>
</feature>
<feature type="mutagenesis site" description="No effect on rescue of PTAP-type L domain-deficient HIV-1 p6." evidence="21 22">
    <original>Y</original>
    <variation>F</variation>
    <location>
        <position position="319"/>
    </location>
</feature>
<feature type="mutagenesis site" description="Impairs rescue of PTAP-type L domain-deficient HIV-1 p6." evidence="21">
    <original>F</original>
    <variation>D</variation>
    <location>
        <position position="495"/>
    </location>
</feature>
<feature type="mutagenesis site" description="Reduces interaction with HIV-1 p6 and EIAV p9; abolishes rescue of PTAP-type L domain-deficient HIV-1 p6." evidence="20 21">
    <original>V</original>
    <variation>D</variation>
    <location>
        <position position="498"/>
    </location>
</feature>
<feature type="mutagenesis site" description="Abolishes interaction with HIV-1 p6; impairs rescue of PTAP-type L domain-deficient HIV-1 p6." evidence="20 21">
    <original>V</original>
    <variation>D</variation>
    <location>
        <position position="509"/>
    </location>
</feature>
<feature type="mutagenesis site" description="No effect on interaction with HIV-1 p6; impairs rescue of PTAP-type L domain-deficient HIV-1 p6." evidence="20">
    <original>C</original>
    <variation>A</variation>
    <location>
        <position position="512"/>
    </location>
</feature>
<feature type="mutagenesis site" description="Loss of interaction with SDCBP." evidence="35">
    <original>F</original>
    <variation>A</variation>
    <location>
        <position position="676"/>
    </location>
</feature>
<feature type="mutagenesis site" description="Abolishes interaction with HIV-1 p6 and EIAV p9; abolishes rescue of PTAP-type L domain-deficient HIV-1 p6; no effect on cytokinesis, nor on midbody formation." evidence="20 21 24 28">
    <original>F</original>
    <variation>D</variation>
    <location>
        <position position="676"/>
    </location>
</feature>
<feature type="mutagenesis site" description="Impairs rescue of PTAP-type L domain-deficient HIV-1 p6." evidence="21">
    <original>L</original>
    <variation>D</variation>
    <location>
        <position position="680"/>
    </location>
</feature>
<feature type="mutagenesis site" description="No effect on interaction with HIV-1 p6." evidence="20 21">
    <original>I</original>
    <variation>A</variation>
    <location>
        <position position="683"/>
    </location>
</feature>
<feature type="mutagenesis site" description="Reduces interaction with HIV-1 p6 and EIAV p9; abolishes rescue of PTAP-type L domain-deficient HIV-1 p6." evidence="20 21">
    <original>I</original>
    <variation>D</variation>
    <location>
        <position position="683"/>
    </location>
</feature>
<feature type="mutagenesis site" description="No effect on midbody formation, nor on cytokinesis; reduced TSG101-binding; no effect on HIV-1 release. Almost complete loss of TSG101-binding and impaired cytokinesis; when associated with 852-A--A-855." evidence="28">
    <original>PSAP</original>
    <variation>AAAA</variation>
    <location>
        <begin position="717"/>
        <end position="720"/>
    </location>
</feature>
<feature type="mutagenesis site" description="Abolishes interaction with TSG101; no effect on rescue of PTAP-type L domain-deficient HIV-1 p6." evidence="21">
    <original>P</original>
    <variation>L</variation>
    <location>
        <position position="720"/>
    </location>
</feature>
<feature type="mutagenesis site" description="No effect on midbody formation; loss of CD2AP- and SH3KBP1-binding in a yeast two-hybrid assay; no effect on HIV-1 release." evidence="28">
    <original>PR</original>
    <variation>VD</variation>
    <location>
        <begin position="744"/>
        <end position="745"/>
    </location>
</feature>
<feature type="mutagenesis site" description="No effect on midbody formation; loss of SH3GL2-binding in a yeast two-hybrid assay." evidence="28">
    <original>RPP</original>
    <variation>GAA</variation>
    <location>
        <begin position="757"/>
        <end position="759"/>
    </location>
</feature>
<feature type="mutagenesis site" description="Abolishes interaction with SH3GL1 and SH3GL2; no effect on rescue of PTAP-type L domain-deficient HIV-1 p6." evidence="21">
    <original>RP</original>
    <variation>AA</variation>
    <location>
        <begin position="757"/>
        <end position="758"/>
    </location>
</feature>
<feature type="mutagenesis site" description="Does not support the formation of normal midbodies; loss of localization to the midbody; loss of CD2AP-, CEP55-, SH3GL2-, SH3KBP1-, TSG101-binding in a yeast two-hybrid assay." evidence="28">
    <location>
        <begin position="794"/>
        <end position="813"/>
    </location>
</feature>
<feature type="mutagenesis site" description="Abolishes interaction with CEP55; inhibits support of cytokinesis." evidence="24">
    <original>GPP</original>
    <variation>AAA</variation>
    <location>
        <begin position="800"/>
        <end position="802"/>
    </location>
</feature>
<feature type="mutagenesis site" description="Loss of midbody localization; does not support cytokinesis; loss of CEP55-binding in a yeast two-hybrid assay; no effect on HIV-1 release." evidence="28">
    <original>PP</original>
    <variation>VD</variation>
    <location>
        <begin position="801"/>
        <end position="802"/>
    </location>
</feature>
<feature type="mutagenesis site" description="Decreased interaction with CEP55." evidence="30">
    <original>P</original>
    <variation>A</variation>
    <location>
        <position position="801"/>
    </location>
</feature>
<feature type="mutagenesis site" description="Decreased interaction with CEP55." evidence="30">
    <original>P</original>
    <variation>A</variation>
    <location>
        <position position="802"/>
    </location>
</feature>
<feature type="mutagenesis site" description="No effect on CEP55-binding in a yeast two-hybrid assay." evidence="28">
    <original>YP</original>
    <variation>VD</variation>
    <location>
        <begin position="803"/>
        <end position="804"/>
    </location>
</feature>
<feature type="mutagenesis site" description="Loss of CEP55-binding in a yeast two-hybrid assay." evidence="28">
    <original>TY</original>
    <variation>VD</variation>
    <location>
        <begin position="805"/>
        <end position="806"/>
    </location>
</feature>
<feature type="mutagenesis site" description="Abolishes interaction with CEP55." evidence="30">
    <original>Y</original>
    <variation>A</variation>
    <location>
        <position position="806"/>
    </location>
</feature>
<feature type="mutagenesis site" description="Loss of homoologimerization and reduced TSG101-binding; decreased HIV-1 release; no effect on cytokinesis. Almost complete loss of TSG101-binding and impaired cytokinesis; when associated with 717-A--A-720." evidence="28">
    <original>PSYP</original>
    <variation>ASAA</variation>
    <location>
        <begin position="852"/>
        <end position="855"/>
    </location>
</feature>
<feature type="mutagenesis site" description="Loss of homooligomerization; reduced TSG101-binding; impaired HIV-1 release." evidence="28">
    <original>YY</original>
    <variation>AA</variation>
    <location>
        <begin position="864"/>
        <end position="865"/>
    </location>
</feature>
<feature type="sequence conflict" description="In Ref. 8; BAA92092." evidence="42" ref="8">
    <original>M</original>
    <variation>T</variation>
    <location>
        <position position="580"/>
    </location>
</feature>
<feature type="helix" evidence="59">
    <location>
        <begin position="18"/>
        <end position="28"/>
    </location>
</feature>
<feature type="strand" evidence="60">
    <location>
        <begin position="29"/>
        <end position="31"/>
    </location>
</feature>
<feature type="strand" evidence="52">
    <location>
        <begin position="32"/>
        <end position="34"/>
    </location>
</feature>
<feature type="helix" evidence="59">
    <location>
        <begin position="35"/>
        <end position="54"/>
    </location>
</feature>
<feature type="helix" evidence="59">
    <location>
        <begin position="62"/>
        <end position="76"/>
    </location>
</feature>
<feature type="turn" evidence="59">
    <location>
        <begin position="77"/>
        <end position="88"/>
    </location>
</feature>
<feature type="strand" evidence="59">
    <location>
        <begin position="93"/>
        <end position="96"/>
    </location>
</feature>
<feature type="strand" evidence="53">
    <location>
        <begin position="98"/>
        <end position="100"/>
    </location>
</feature>
<feature type="turn" evidence="58">
    <location>
        <begin position="104"/>
        <end position="106"/>
    </location>
</feature>
<feature type="strand" evidence="59">
    <location>
        <begin position="110"/>
        <end position="114"/>
    </location>
</feature>
<feature type="helix" evidence="59">
    <location>
        <begin position="116"/>
        <end position="136"/>
    </location>
</feature>
<feature type="strand" evidence="52">
    <location>
        <begin position="140"/>
        <end position="142"/>
    </location>
</feature>
<feature type="helix" evidence="59">
    <location>
        <begin position="143"/>
        <end position="170"/>
    </location>
</feature>
<feature type="strand" evidence="52">
    <location>
        <begin position="171"/>
        <end position="173"/>
    </location>
</feature>
<feature type="helix" evidence="59">
    <location>
        <begin position="177"/>
        <end position="179"/>
    </location>
</feature>
<feature type="helix" evidence="59">
    <location>
        <begin position="181"/>
        <end position="205"/>
    </location>
</feature>
<feature type="helix" evidence="59">
    <location>
        <begin position="210"/>
        <end position="231"/>
    </location>
</feature>
<feature type="helix" evidence="59">
    <location>
        <begin position="241"/>
        <end position="266"/>
    </location>
</feature>
<feature type="helix" evidence="59">
    <location>
        <begin position="270"/>
        <end position="290"/>
    </location>
</feature>
<feature type="turn" evidence="59">
    <location>
        <begin position="292"/>
        <end position="294"/>
    </location>
</feature>
<feature type="helix" evidence="59">
    <location>
        <begin position="298"/>
        <end position="317"/>
    </location>
</feature>
<feature type="helix" evidence="59">
    <location>
        <begin position="326"/>
        <end position="328"/>
    </location>
</feature>
<feature type="strand" evidence="56">
    <location>
        <begin position="348"/>
        <end position="350"/>
    </location>
</feature>
<feature type="turn" evidence="58">
    <location>
        <begin position="354"/>
        <end position="357"/>
    </location>
</feature>
<feature type="helix" evidence="54">
    <location>
        <begin position="361"/>
        <end position="398"/>
    </location>
</feature>
<feature type="turn" evidence="54">
    <location>
        <begin position="399"/>
        <end position="402"/>
    </location>
</feature>
<feature type="helix" evidence="54">
    <location>
        <begin position="403"/>
        <end position="406"/>
    </location>
</feature>
<feature type="strand" evidence="53">
    <location>
        <begin position="408"/>
        <end position="412"/>
    </location>
</feature>
<feature type="helix" evidence="54">
    <location>
        <begin position="415"/>
        <end position="426"/>
    </location>
</feature>
<feature type="turn" evidence="54">
    <location>
        <begin position="427"/>
        <end position="429"/>
    </location>
</feature>
<feature type="helix" evidence="54">
    <location>
        <begin position="430"/>
        <end position="471"/>
    </location>
</feature>
<feature type="turn" evidence="54">
    <location>
        <begin position="473"/>
        <end position="475"/>
    </location>
</feature>
<feature type="helix" evidence="54">
    <location>
        <begin position="481"/>
        <end position="514"/>
    </location>
</feature>
<feature type="helix" evidence="54">
    <location>
        <begin position="517"/>
        <end position="523"/>
    </location>
</feature>
<feature type="helix" evidence="54">
    <location>
        <begin position="527"/>
        <end position="532"/>
    </location>
</feature>
<feature type="helix" evidence="54">
    <location>
        <begin position="541"/>
        <end position="543"/>
    </location>
</feature>
<feature type="helix" evidence="54">
    <location>
        <begin position="547"/>
        <end position="575"/>
    </location>
</feature>
<feature type="helix" evidence="54">
    <location>
        <begin position="581"/>
        <end position="590"/>
    </location>
</feature>
<feature type="strand" evidence="53">
    <location>
        <begin position="591"/>
        <end position="593"/>
    </location>
</feature>
<feature type="helix" evidence="54">
    <location>
        <begin position="596"/>
        <end position="639"/>
    </location>
</feature>
<feature type="helix" evidence="54">
    <location>
        <begin position="644"/>
        <end position="697"/>
    </location>
</feature>
<feature type="strand" evidence="57">
    <location>
        <begin position="802"/>
        <end position="805"/>
    </location>
</feature>
<feature type="turn" evidence="55">
    <location>
        <begin position="810"/>
        <end position="813"/>
    </location>
</feature>
<evidence type="ECO:0000250" key="1">
    <source>
        <dbReference type="UniProtKB" id="Q9QZA2"/>
    </source>
</evidence>
<evidence type="ECO:0000250" key="2">
    <source>
        <dbReference type="UniProtKB" id="Q9WU78"/>
    </source>
</evidence>
<evidence type="ECO:0000255" key="3">
    <source>
        <dbReference type="PROSITE-ProRule" id="PRU00526"/>
    </source>
</evidence>
<evidence type="ECO:0000256" key="4">
    <source>
        <dbReference type="SAM" id="MobiDB-lite"/>
    </source>
</evidence>
<evidence type="ECO:0000269" key="5">
    <source>
    </source>
</evidence>
<evidence type="ECO:0000269" key="6">
    <source>
    </source>
</evidence>
<evidence type="ECO:0000269" key="7">
    <source>
    </source>
</evidence>
<evidence type="ECO:0000269" key="8">
    <source>
    </source>
</evidence>
<evidence type="ECO:0000269" key="9">
    <source>
    </source>
</evidence>
<evidence type="ECO:0000269" key="10">
    <source>
    </source>
</evidence>
<evidence type="ECO:0000269" key="11">
    <source>
    </source>
</evidence>
<evidence type="ECO:0000269" key="12">
    <source>
    </source>
</evidence>
<evidence type="ECO:0000269" key="13">
    <source>
    </source>
</evidence>
<evidence type="ECO:0000269" key="14">
    <source>
    </source>
</evidence>
<evidence type="ECO:0000269" key="15">
    <source>
    </source>
</evidence>
<evidence type="ECO:0000269" key="16">
    <source>
    </source>
</evidence>
<evidence type="ECO:0000269" key="17">
    <source>
    </source>
</evidence>
<evidence type="ECO:0000269" key="18">
    <source>
    </source>
</evidence>
<evidence type="ECO:0000269" key="19">
    <source>
    </source>
</evidence>
<evidence type="ECO:0000269" key="20">
    <source>
    </source>
</evidence>
<evidence type="ECO:0000269" key="21">
    <source>
    </source>
</evidence>
<evidence type="ECO:0000269" key="22">
    <source>
    </source>
</evidence>
<evidence type="ECO:0000269" key="23">
    <source>
    </source>
</evidence>
<evidence type="ECO:0000269" key="24">
    <source>
    </source>
</evidence>
<evidence type="ECO:0000269" key="25">
    <source>
    </source>
</evidence>
<evidence type="ECO:0000269" key="26">
    <source>
    </source>
</evidence>
<evidence type="ECO:0000269" key="27">
    <source>
    </source>
</evidence>
<evidence type="ECO:0000269" key="28">
    <source>
    </source>
</evidence>
<evidence type="ECO:0000269" key="29">
    <source>
    </source>
</evidence>
<evidence type="ECO:0000269" key="30">
    <source>
    </source>
</evidence>
<evidence type="ECO:0000269" key="31">
    <source>
    </source>
</evidence>
<evidence type="ECO:0000269" key="32">
    <source>
    </source>
</evidence>
<evidence type="ECO:0000269" key="33">
    <source>
    </source>
</evidence>
<evidence type="ECO:0000269" key="34">
    <source>
    </source>
</evidence>
<evidence type="ECO:0000269" key="35">
    <source>
    </source>
</evidence>
<evidence type="ECO:0000269" key="36">
    <source>
    </source>
</evidence>
<evidence type="ECO:0000269" key="37">
    <source>
    </source>
</evidence>
<evidence type="ECO:0000269" key="38">
    <source ref="3"/>
</evidence>
<evidence type="ECO:0000269" key="39">
    <source ref="7"/>
</evidence>
<evidence type="ECO:0000303" key="40">
    <source>
    </source>
</evidence>
<evidence type="ECO:0000303" key="41">
    <source>
    </source>
</evidence>
<evidence type="ECO:0000305" key="42"/>
<evidence type="ECO:0000312" key="43">
    <source>
        <dbReference type="HGNC" id="HGNC:8766"/>
    </source>
</evidence>
<evidence type="ECO:0007744" key="44">
    <source>
    </source>
</evidence>
<evidence type="ECO:0007744" key="45">
    <source>
    </source>
</evidence>
<evidence type="ECO:0007744" key="46">
    <source>
    </source>
</evidence>
<evidence type="ECO:0007744" key="47">
    <source>
    </source>
</evidence>
<evidence type="ECO:0007744" key="48">
    <source>
    </source>
</evidence>
<evidence type="ECO:0007744" key="49">
    <source>
    </source>
</evidence>
<evidence type="ECO:0007744" key="50">
    <source>
    </source>
</evidence>
<evidence type="ECO:0007744" key="51">
    <source>
    </source>
</evidence>
<evidence type="ECO:0007829" key="52">
    <source>
        <dbReference type="PDB" id="2OEV"/>
    </source>
</evidence>
<evidence type="ECO:0007829" key="53">
    <source>
        <dbReference type="PDB" id="2R05"/>
    </source>
</evidence>
<evidence type="ECO:0007829" key="54">
    <source>
        <dbReference type="PDB" id="2XS1"/>
    </source>
</evidence>
<evidence type="ECO:0007829" key="55">
    <source>
        <dbReference type="PDB" id="2ZNE"/>
    </source>
</evidence>
<evidence type="ECO:0007829" key="56">
    <source>
        <dbReference type="PDB" id="3C3R"/>
    </source>
</evidence>
<evidence type="ECO:0007829" key="57">
    <source>
        <dbReference type="PDB" id="3E1R"/>
    </source>
</evidence>
<evidence type="ECO:0007829" key="58">
    <source>
        <dbReference type="PDB" id="5V3R"/>
    </source>
</evidence>
<evidence type="ECO:0007829" key="59">
    <source>
        <dbReference type="PDB" id="5WA1"/>
    </source>
</evidence>
<evidence type="ECO:0007829" key="60">
    <source>
        <dbReference type="PDB" id="6KP3"/>
    </source>
</evidence>
<sequence>MATFISVQLKKTSEVDLAKPLVKFIQQTYPSGGEEQAQYCRAAEELSKLRRAAVGRPLDKHEGALETLLRYYDQICSIEPKFPFSENQICLTFTWKDAFDKGSLFGGSVKLALASLGYEKSCVLFNCAALASQIAAEQNLDNDEGLKIAAKHYQFASGAFLHIKETVLSALSREPTVDISPDTVGTLSLIMLAQAQEVFFLKATRDKMKDAIIAKLANQAADYFGDAFKQCQYKDTLPKEVFPVLAAKHCIMQANAEYHQSILAKQQKKFGEEIARLQHAAELIKTVASRYDEYVNVKDFSDKINRALAAAKKDNDFIYHDRVPDLKDLDPIGKATLVKSTPVNVPISQKFTDLFEKMVPVSVQQSLAAYNQRKADLVNRSIAQMREATTLANGVLASLNLPAAIEDVSGDTVPQSILTKSRSVIEQGGIQTVDQLIKELPELLQRNREILDESLRLLDEEEATDNDLRAKFKERWQRTPSNELYKPLRAEGTNFRTVLDKAVQADGQVKECYQSHRDTIVLLCKPEPELNAAIPSANPAKTMQGSEVVNVLKSLLSNLDEVKKEREGLENDLKSVNFDMTSKFLTALAQDGVINEEALSVTELDRVYGGLTTKVQESLKKQEGLLKNIQVSHQEFSKMKQSNNEANLREEVLKNLATAYDNFVELVANLKEGTKFYNELTEILVRFQNKCSDIVFARKTERDELLKDLQQSIAREPSAPSIPTPAYQSSPAGGHAPTPPTPAPRTMPPTKPQPPARPPPPVLPANRAPSATAPSPVGAGTAAPAPSQTPGSAPPPQAQGPPYPTYPGYPGYCQMPMPMGYNPYAYGQYNMPYPPVYHQSPGQAPYPGPQQPSYPFPQPPQQSYYPQQ</sequence>